<reference key="1">
    <citation type="journal article" date="1991" name="J. Virol.">
        <title>Isolation of cDNAs for DNA-binding proteins which specifically bind to a tax-responsive enhancer element in the long terminal repeat of human T-cell leukemia virus type I.</title>
        <authorList>
            <person name="Tsujimoto A."/>
            <person name="Nyunoya H."/>
            <person name="Morita T."/>
            <person name="Sato T."/>
            <person name="Shimotohno K."/>
        </authorList>
    </citation>
    <scope>NUCLEOTIDE SEQUENCE [MRNA]</scope>
    <scope>FUNCTION</scope>
    <scope>VARIANT PRO-22</scope>
    <source>
        <tissue>Fibroblast</tissue>
    </source>
</reference>
<reference key="2">
    <citation type="journal article" date="1992" name="Proc. Natl. Acad. Sci. U.S.A.">
        <title>Molecular cloning of human CREB-2: an ATF/CREB transcription factor that can negatively regulate transcription from the cAMP response element.</title>
        <authorList>
            <person name="Karpinski B.A."/>
            <person name="Morle G.D."/>
            <person name="Huggenvik J."/>
            <person name="Uhler M.D."/>
            <person name="Leiden J.M."/>
        </authorList>
    </citation>
    <scope>NUCLEOTIDE SEQUENCE [MRNA]</scope>
    <scope>VARIANT PRO-22</scope>
    <source>
        <tissue>Leukemic T-cell</tissue>
    </source>
</reference>
<reference key="3">
    <citation type="journal article" date="2004" name="Genome Biol.">
        <title>A genome annotation-driven approach to cloning the human ORFeome.</title>
        <authorList>
            <person name="Collins J.E."/>
            <person name="Wright C.L."/>
            <person name="Edwards C.A."/>
            <person name="Davis M.P."/>
            <person name="Grinham J.A."/>
            <person name="Cole C.G."/>
            <person name="Goward M.E."/>
            <person name="Aguado B."/>
            <person name="Mallya M."/>
            <person name="Mokrab Y."/>
            <person name="Huckle E.J."/>
            <person name="Beare D.M."/>
            <person name="Dunham I."/>
        </authorList>
    </citation>
    <scope>NUCLEOTIDE SEQUENCE [LARGE SCALE MRNA]</scope>
</reference>
<reference key="4">
    <citation type="journal article" date="1999" name="Nature">
        <title>The DNA sequence of human chromosome 22.</title>
        <authorList>
            <person name="Dunham I."/>
            <person name="Hunt A.R."/>
            <person name="Collins J.E."/>
            <person name="Bruskiewich R."/>
            <person name="Beare D.M."/>
            <person name="Clamp M."/>
            <person name="Smink L.J."/>
            <person name="Ainscough R."/>
            <person name="Almeida J.P."/>
            <person name="Babbage A.K."/>
            <person name="Bagguley C."/>
            <person name="Bailey J."/>
            <person name="Barlow K.F."/>
            <person name="Bates K.N."/>
            <person name="Beasley O.P."/>
            <person name="Bird C.P."/>
            <person name="Blakey S.E."/>
            <person name="Bridgeman A.M."/>
            <person name="Buck D."/>
            <person name="Burgess J."/>
            <person name="Burrill W.D."/>
            <person name="Burton J."/>
            <person name="Carder C."/>
            <person name="Carter N.P."/>
            <person name="Chen Y."/>
            <person name="Clark G."/>
            <person name="Clegg S.M."/>
            <person name="Cobley V.E."/>
            <person name="Cole C.G."/>
            <person name="Collier R.E."/>
            <person name="Connor R."/>
            <person name="Conroy D."/>
            <person name="Corby N.R."/>
            <person name="Coville G.J."/>
            <person name="Cox A.V."/>
            <person name="Davis J."/>
            <person name="Dawson E."/>
            <person name="Dhami P.D."/>
            <person name="Dockree C."/>
            <person name="Dodsworth S.J."/>
            <person name="Durbin R.M."/>
            <person name="Ellington A.G."/>
            <person name="Evans K.L."/>
            <person name="Fey J.M."/>
            <person name="Fleming K."/>
            <person name="French L."/>
            <person name="Garner A.A."/>
            <person name="Gilbert J.G.R."/>
            <person name="Goward M.E."/>
            <person name="Grafham D.V."/>
            <person name="Griffiths M.N.D."/>
            <person name="Hall C."/>
            <person name="Hall R.E."/>
            <person name="Hall-Tamlyn G."/>
            <person name="Heathcott R.W."/>
            <person name="Ho S."/>
            <person name="Holmes S."/>
            <person name="Hunt S.E."/>
            <person name="Jones M.C."/>
            <person name="Kershaw J."/>
            <person name="Kimberley A.M."/>
            <person name="King A."/>
            <person name="Laird G.K."/>
            <person name="Langford C.F."/>
            <person name="Leversha M.A."/>
            <person name="Lloyd C."/>
            <person name="Lloyd D.M."/>
            <person name="Martyn I.D."/>
            <person name="Mashreghi-Mohammadi M."/>
            <person name="Matthews L.H."/>
            <person name="Mccann O.T."/>
            <person name="Mcclay J."/>
            <person name="Mclaren S."/>
            <person name="McMurray A.A."/>
            <person name="Milne S.A."/>
            <person name="Mortimore B.J."/>
            <person name="Odell C.N."/>
            <person name="Pavitt R."/>
            <person name="Pearce A.V."/>
            <person name="Pearson D."/>
            <person name="Phillimore B.J.C.T."/>
            <person name="Phillips S.H."/>
            <person name="Plumb R.W."/>
            <person name="Ramsay H."/>
            <person name="Ramsey Y."/>
            <person name="Rogers L."/>
            <person name="Ross M.T."/>
            <person name="Scott C.E."/>
            <person name="Sehra H.K."/>
            <person name="Skuce C.D."/>
            <person name="Smalley S."/>
            <person name="Smith M.L."/>
            <person name="Soderlund C."/>
            <person name="Spragon L."/>
            <person name="Steward C.A."/>
            <person name="Sulston J.E."/>
            <person name="Swann R.M."/>
            <person name="Vaudin M."/>
            <person name="Wall M."/>
            <person name="Wallis J.M."/>
            <person name="Whiteley M.N."/>
            <person name="Willey D.L."/>
            <person name="Williams L."/>
            <person name="Williams S.A."/>
            <person name="Williamson H."/>
            <person name="Wilmer T.E."/>
            <person name="Wilming L."/>
            <person name="Wright C.L."/>
            <person name="Hubbard T."/>
            <person name="Bentley D.R."/>
            <person name="Beck S."/>
            <person name="Rogers J."/>
            <person name="Shimizu N."/>
            <person name="Minoshima S."/>
            <person name="Kawasaki K."/>
            <person name="Sasaki T."/>
            <person name="Asakawa S."/>
            <person name="Kudoh J."/>
            <person name="Shintani A."/>
            <person name="Shibuya K."/>
            <person name="Yoshizaki Y."/>
            <person name="Aoki N."/>
            <person name="Mitsuyama S."/>
            <person name="Roe B.A."/>
            <person name="Chen F."/>
            <person name="Chu L."/>
            <person name="Crabtree J."/>
            <person name="Deschamps S."/>
            <person name="Do A."/>
            <person name="Do T."/>
            <person name="Dorman A."/>
            <person name="Fang F."/>
            <person name="Fu Y."/>
            <person name="Hu P."/>
            <person name="Hua A."/>
            <person name="Kenton S."/>
            <person name="Lai H."/>
            <person name="Lao H.I."/>
            <person name="Lewis J."/>
            <person name="Lewis S."/>
            <person name="Lin S.-P."/>
            <person name="Loh P."/>
            <person name="Malaj E."/>
            <person name="Nguyen T."/>
            <person name="Pan H."/>
            <person name="Phan S."/>
            <person name="Qi S."/>
            <person name="Qian Y."/>
            <person name="Ray L."/>
            <person name="Ren Q."/>
            <person name="Shaull S."/>
            <person name="Sloan D."/>
            <person name="Song L."/>
            <person name="Wang Q."/>
            <person name="Wang Y."/>
            <person name="Wang Z."/>
            <person name="White J."/>
            <person name="Willingham D."/>
            <person name="Wu H."/>
            <person name="Yao Z."/>
            <person name="Zhan M."/>
            <person name="Zhang G."/>
            <person name="Chissoe S."/>
            <person name="Murray J."/>
            <person name="Miller N."/>
            <person name="Minx P."/>
            <person name="Fulton R."/>
            <person name="Johnson D."/>
            <person name="Bemis G."/>
            <person name="Bentley D."/>
            <person name="Bradshaw H."/>
            <person name="Bourne S."/>
            <person name="Cordes M."/>
            <person name="Du Z."/>
            <person name="Fulton L."/>
            <person name="Goela D."/>
            <person name="Graves T."/>
            <person name="Hawkins J."/>
            <person name="Hinds K."/>
            <person name="Kemp K."/>
            <person name="Latreille P."/>
            <person name="Layman D."/>
            <person name="Ozersky P."/>
            <person name="Rohlfing T."/>
            <person name="Scheet P."/>
            <person name="Walker C."/>
            <person name="Wamsley A."/>
            <person name="Wohldmann P."/>
            <person name="Pepin K."/>
            <person name="Nelson J."/>
            <person name="Korf I."/>
            <person name="Bedell J.A."/>
            <person name="Hillier L.W."/>
            <person name="Mardis E."/>
            <person name="Waterston R."/>
            <person name="Wilson R."/>
            <person name="Emanuel B.S."/>
            <person name="Shaikh T."/>
            <person name="Kurahashi H."/>
            <person name="Saitta S."/>
            <person name="Budarf M.L."/>
            <person name="McDermid H.E."/>
            <person name="Johnson A."/>
            <person name="Wong A.C.C."/>
            <person name="Morrow B.E."/>
            <person name="Edelmann L."/>
            <person name="Kim U.J."/>
            <person name="Shizuya H."/>
            <person name="Simon M.I."/>
            <person name="Dumanski J.P."/>
            <person name="Peyrard M."/>
            <person name="Kedra D."/>
            <person name="Seroussi E."/>
            <person name="Fransson I."/>
            <person name="Tapia I."/>
            <person name="Bruder C.E."/>
            <person name="O'Brien K.P."/>
            <person name="Wilkinson P."/>
            <person name="Bodenteich A."/>
            <person name="Hartman K."/>
            <person name="Hu X."/>
            <person name="Khan A.S."/>
            <person name="Lane L."/>
            <person name="Tilahun Y."/>
            <person name="Wright H."/>
        </authorList>
    </citation>
    <scope>NUCLEOTIDE SEQUENCE [LARGE SCALE GENOMIC DNA]</scope>
</reference>
<reference key="5">
    <citation type="submission" date="2005-07" db="EMBL/GenBank/DDBJ databases">
        <authorList>
            <person name="Mural R.J."/>
            <person name="Istrail S."/>
            <person name="Sutton G.G."/>
            <person name="Florea L."/>
            <person name="Halpern A.L."/>
            <person name="Mobarry C.M."/>
            <person name="Lippert R."/>
            <person name="Walenz B."/>
            <person name="Shatkay H."/>
            <person name="Dew I."/>
            <person name="Miller J.R."/>
            <person name="Flanigan M.J."/>
            <person name="Edwards N.J."/>
            <person name="Bolanos R."/>
            <person name="Fasulo D."/>
            <person name="Halldorsson B.V."/>
            <person name="Hannenhalli S."/>
            <person name="Turner R."/>
            <person name="Yooseph S."/>
            <person name="Lu F."/>
            <person name="Nusskern D.R."/>
            <person name="Shue B.C."/>
            <person name="Zheng X.H."/>
            <person name="Zhong F."/>
            <person name="Delcher A.L."/>
            <person name="Huson D.H."/>
            <person name="Kravitz S.A."/>
            <person name="Mouchard L."/>
            <person name="Reinert K."/>
            <person name="Remington K.A."/>
            <person name="Clark A.G."/>
            <person name="Waterman M.S."/>
            <person name="Eichler E.E."/>
            <person name="Adams M.D."/>
            <person name="Hunkapiller M.W."/>
            <person name="Myers E.W."/>
            <person name="Venter J.C."/>
        </authorList>
    </citation>
    <scope>NUCLEOTIDE SEQUENCE [LARGE SCALE GENOMIC DNA]</scope>
</reference>
<reference key="6">
    <citation type="journal article" date="2004" name="Genome Res.">
        <title>The status, quality, and expansion of the NIH full-length cDNA project: the Mammalian Gene Collection (MGC).</title>
        <authorList>
            <consortium name="The MGC Project Team"/>
        </authorList>
    </citation>
    <scope>NUCLEOTIDE SEQUENCE [LARGE SCALE MRNA]</scope>
    <scope>VARIANT PRO-22</scope>
    <source>
        <tissue>Colon</tissue>
        <tissue>Lung</tissue>
        <tissue>Placenta</tissue>
        <tissue>Urinary bladder</tissue>
    </source>
</reference>
<reference key="7">
    <citation type="journal article" date="1989" name="Genes Dev.">
        <title>Transcription factor ATF cDNA clones: an extensive family of leucine zipper proteins able to selectively form DNA-binding heterodimers.</title>
        <authorList>
            <person name="Hai T."/>
            <person name="Liu F."/>
            <person name="Coukos W.J."/>
            <person name="Green M.R."/>
        </authorList>
    </citation>
    <scope>NUCLEOTIDE SEQUENCE [MRNA] OF 274-341</scope>
</reference>
<reference key="8">
    <citation type="journal article" date="1990" name="Genes Dev.">
        <authorList>
            <person name="Hai T."/>
            <person name="Liu F."/>
            <person name="Coukos W.J."/>
            <person name="Green M.R."/>
        </authorList>
    </citation>
    <scope>ERRATUM OF PUBMED:2516827</scope>
</reference>
<reference key="9">
    <citation type="journal article" date="2001" name="Mol. Cell. Biol.">
        <title>ATF4 degradation relies on a phosphorylation-dependent interaction with the SCF(betaTrCP) ubiquitin ligase.</title>
        <authorList>
            <person name="Lassot I."/>
            <person name="Segeral E."/>
            <person name="Berlioz-Torrent C."/>
            <person name="Durand H."/>
            <person name="Groussin L."/>
            <person name="Hai T."/>
            <person name="Benarous R."/>
            <person name="Margottin-Goguet F."/>
        </authorList>
    </citation>
    <scope>UBIQUITINATION</scope>
</reference>
<reference key="10">
    <citation type="journal article" date="2002" name="J. Biol. Chem.">
        <title>ATF4 is a mediator of the nutrient-sensing response pathway that activates the human asparagine synthetase gene.</title>
        <authorList>
            <person name="Siu F."/>
            <person name="Bain P.J."/>
            <person name="LeBlanc-Chaffin R."/>
            <person name="Chen H."/>
            <person name="Kilberg M.S."/>
        </authorList>
    </citation>
    <scope>FUNCTION</scope>
</reference>
<reference key="11">
    <citation type="journal article" date="2004" name="Cell">
        <title>ATF4 is a substrate of RSK2 and an essential regulator of osteoblast biology; implication for Coffin-Lowry Syndrome.</title>
        <authorList>
            <person name="Yang X."/>
            <person name="Matsuda K."/>
            <person name="Bialek P."/>
            <person name="Jacquot S."/>
            <person name="Masuoka H.C."/>
            <person name="Schinke T."/>
            <person name="Li L."/>
            <person name="Brancorsini S."/>
            <person name="Sassone-Corsi P."/>
            <person name="Townes T.M."/>
            <person name="Hanauer A."/>
            <person name="Karsenty G."/>
        </authorList>
    </citation>
    <scope>FUNCTION</scope>
    <scope>PHOSPHORYLATION AT SER-245</scope>
    <scope>MUTAGENESIS OF SER-245</scope>
</reference>
<reference key="12">
    <citation type="journal article" date="2005" name="EMBO J.">
        <title>TRB3, a novel ER stress-inducible gene, is induced via ATF4-CHOP pathway and is involved in cell death.</title>
        <authorList>
            <person name="Ohoka N."/>
            <person name="Yoshii S."/>
            <person name="Hattori T."/>
            <person name="Onozaki K."/>
            <person name="Hayashi H."/>
        </authorList>
    </citation>
    <scope>FUNCTION</scope>
</reference>
<reference key="13">
    <citation type="journal article" date="2005" name="J. Biol. Chem.">
        <title>p300 modulates ATF4 stability and transcriptional activity independently of its acetyltransferase domain.</title>
        <authorList>
            <person name="Lassot I."/>
            <person name="Estrabaud E."/>
            <person name="Emiliani S."/>
            <person name="Benkirane M."/>
            <person name="Benarous R."/>
            <person name="Margottin-Goguet F."/>
        </authorList>
    </citation>
    <scope>ACETYLATION AT LYS-311</scope>
    <scope>UBIQUITINATION</scope>
    <scope>SUBCELLULAR LOCATION</scope>
    <scope>INTERACTION WITH EP300</scope>
    <scope>MUTAGENESIS OF SER-219 AND LYS-311</scope>
</reference>
<reference key="14">
    <citation type="journal article" date="2005" name="J. Cell Biol.">
        <title>FIAT represses ATF4-mediated transcription to regulate bone mass in transgenic mice.</title>
        <authorList>
            <person name="Yu V.W."/>
            <person name="Ambartsoumian G."/>
            <person name="Verlinden L."/>
            <person name="Moir J.M."/>
            <person name="Prud'homme J."/>
            <person name="Gauthier C."/>
            <person name="Roughley P.J."/>
            <person name="St-Arnaud R."/>
        </authorList>
    </citation>
    <scope>INTERACTION WITH TXLNG</scope>
</reference>
<reference key="15">
    <citation type="journal article" date="2006" name="Nat. Genet.">
        <title>The centrosomal protein nephrocystin-6 is mutated in Joubert syndrome and activates transcription factor ATF4.</title>
        <authorList>
            <person name="Sayer J.A."/>
            <person name="Otto E.A."/>
            <person name="O'toole J.F."/>
            <person name="Nurnberg G."/>
            <person name="Kennedy M.A."/>
            <person name="Becker C."/>
            <person name="Hennies H.C."/>
            <person name="Helou J."/>
            <person name="Attanasio M."/>
            <person name="Fausett B.V."/>
            <person name="Utsch B."/>
            <person name="Khanna H."/>
            <person name="Liu Y."/>
            <person name="Drummond I."/>
            <person name="Kawakami I."/>
            <person name="Kusakabe T."/>
            <person name="Tsuda M."/>
            <person name="Ma L."/>
            <person name="Lee H."/>
            <person name="Larson R.G."/>
            <person name="Allen S.J."/>
            <person name="Wilkinson C.J."/>
            <person name="Nigg E.A."/>
            <person name="Shou C."/>
            <person name="Lillo C."/>
            <person name="Williams D.S."/>
            <person name="Hoppe B."/>
            <person name="Kemper M.J."/>
            <person name="Neuhaus T."/>
            <person name="Parisi M.A."/>
            <person name="Glass I.A."/>
            <person name="Petry M."/>
            <person name="Kispert A."/>
            <person name="Gloy J."/>
            <person name="Ganner A."/>
            <person name="Walz G."/>
            <person name="Zhu X."/>
            <person name="Goldman D."/>
            <person name="Nurnberg P."/>
            <person name="Swaroop A."/>
            <person name="Leroux M.R."/>
            <person name="Hildebrandt F."/>
        </authorList>
    </citation>
    <scope>FUNCTION</scope>
    <scope>SUBCELLULAR LOCATION</scope>
    <scope>INTERACTION WITH CEP290</scope>
</reference>
<reference key="16">
    <citation type="journal article" date="2007" name="Blood">
        <title>Oxygen-dependent ATF-4 stability is mediated by the PHD3 oxygen sensor.</title>
        <authorList>
            <person name="Koeditz J."/>
            <person name="Nesper J."/>
            <person name="Wottawa M."/>
            <person name="Stiehl D.P."/>
            <person name="Camenisch G."/>
            <person name="Franke C."/>
            <person name="Myllyharju J."/>
            <person name="Wenger R.H."/>
            <person name="Katschinski D.M."/>
        </authorList>
    </citation>
    <scope>HYDROXYLATION</scope>
    <scope>MUTAGENESIS OF PRO-156; PRO-162; PRO-164; PRO-167 AND PRO-174</scope>
</reference>
<reference key="17">
    <citation type="journal article" date="2008" name="J. Biol. Chem.">
        <title>C/EBP homology protein (CHOP) interacts with activating transcription factor 4 (ATF4) and negatively regulates the stress-dependent induction of the asparagine synthetase gene.</title>
        <authorList>
            <person name="Su N."/>
            <person name="Kilberg M.S."/>
        </authorList>
    </citation>
    <scope>FUNCTION</scope>
    <scope>INTERACTION WITH DDIT3</scope>
</reference>
<reference key="18">
    <citation type="journal article" date="2010" name="J. Proteome Res.">
        <title>Characterization of hNek6 interactome reveals an important role for its short N-terminal domain and colocalization with proteins at the centrosome.</title>
        <authorList>
            <person name="Vaz Meirelles G."/>
            <person name="Ferreira Lanza D.C."/>
            <person name="da Silva J.C."/>
            <person name="Santana Bernachi J."/>
            <person name="Paes Leme A.F."/>
            <person name="Kobarg J."/>
        </authorList>
    </citation>
    <scope>SUBCELLULAR LOCATION</scope>
    <scope>INTERACTION WITH NEK6</scope>
    <scope>PHOSPHORYLATION</scope>
</reference>
<reference key="19">
    <citation type="journal article" date="2010" name="Sci. Signal.">
        <title>Quantitative phosphoproteomics reveals widespread full phosphorylation site occupancy during mitosis.</title>
        <authorList>
            <person name="Olsen J.V."/>
            <person name="Vermeulen M."/>
            <person name="Santamaria A."/>
            <person name="Kumar C."/>
            <person name="Miller M.L."/>
            <person name="Jensen L.J."/>
            <person name="Gnad F."/>
            <person name="Cox J."/>
            <person name="Jensen T.S."/>
            <person name="Nigg E.A."/>
            <person name="Brunak S."/>
            <person name="Mann M."/>
        </authorList>
    </citation>
    <scope>IDENTIFICATION BY MASS SPECTROMETRY [LARGE SCALE ANALYSIS]</scope>
    <source>
        <tissue>Cervix carcinoma</tissue>
    </source>
</reference>
<reference key="20">
    <citation type="journal article" date="2011" name="PLoS ONE">
        <title>New modularity of DAP-kinases: alternative splicing of the DRP-1 gene produces a ZIPk-like isoform.</title>
        <authorList>
            <person name="Shoval Y."/>
            <person name="Berissi H."/>
            <person name="Kimchi A."/>
            <person name="Pietrokovski S."/>
        </authorList>
    </citation>
    <scope>INTERACTION WITH DAPK2 AND ZIPK/DAPK3</scope>
</reference>
<reference key="21">
    <citation type="journal article" date="2012" name="Biochim. Biophys. Acta">
        <title>ATF4 interacts with Abro1/KIAA0157 scaffold protein and participates in a cytoprotective pathway.</title>
        <authorList>
            <person name="Ambivero C.T."/>
            <person name="Cilenti L."/>
            <person name="Zervos A.S."/>
        </authorList>
    </citation>
    <scope>INTERACTION WITH ABRAXAS2</scope>
    <scope>SUBCELLULAR LOCATION</scope>
</reference>
<reference key="22">
    <citation type="journal article" date="2013" name="Biochim. Biophys. Acta">
        <title>Functional interaction of protein kinase CK2 and activating transcription factor 4 (ATF4), a key player in the cellular stress response.</title>
        <authorList>
            <person name="Ampofo E."/>
            <person name="Sokolowsky T."/>
            <person name="Goetz C."/>
            <person name="Montenarh M."/>
        </authorList>
    </citation>
    <scope>PHOSPHORYLATION AT SER-215</scope>
    <scope>SUBCELLULAR LOCATION</scope>
    <scope>MUTAGENESIS OF THR-213 AND SER-215</scope>
</reference>
<reference key="23">
    <citation type="journal article" date="2014" name="Nat. Struct. Mol. Biol.">
        <title>Uncovering global SUMOylation signaling networks in a site-specific manner.</title>
        <authorList>
            <person name="Hendriks I.A."/>
            <person name="D'Souza R.C."/>
            <person name="Yang B."/>
            <person name="Verlaan-de Vries M."/>
            <person name="Mann M."/>
            <person name="Vertegaal A.C."/>
        </authorList>
    </citation>
    <scope>SUMOYLATION [LARGE SCALE ANALYSIS] AT LYS-267</scope>
    <scope>IDENTIFICATION BY MASS SPECTROMETRY [LARGE SCALE ANALYSIS]</scope>
</reference>
<reference key="24">
    <citation type="journal article" date="2015" name="PLoS ONE">
        <title>Transcription factor ATF4 induces NLRP1 inflammasome expression during endoplasmic reticulum stress.</title>
        <authorList>
            <person name="D'Osualdo A."/>
            <person name="Anania V.G."/>
            <person name="Yu K."/>
            <person name="Lill J.R."/>
            <person name="Kaufman R.J."/>
            <person name="Matsuzawa S."/>
            <person name="Reed J.C."/>
        </authorList>
    </citation>
    <scope>FUNCTION</scope>
</reference>
<reference key="25">
    <citation type="journal article" date="2016" name="EMBO Rep.">
        <title>The integrated stress response.</title>
        <authorList>
            <person name="Pakos-Zebrucka K."/>
            <person name="Koryga I."/>
            <person name="Mnich K."/>
            <person name="Ljujic M."/>
            <person name="Samali A."/>
            <person name="Gorman A.M."/>
        </authorList>
    </citation>
    <scope>REVIEW</scope>
</reference>
<reference key="26">
    <citation type="journal article" date="2017" name="Nat. Struct. Mol. Biol.">
        <title>Site-specific mapping of the human SUMO proteome reveals co-modification with phosphorylation.</title>
        <authorList>
            <person name="Hendriks I.A."/>
            <person name="Lyon D."/>
            <person name="Young C."/>
            <person name="Jensen L.J."/>
            <person name="Vertegaal A.C."/>
            <person name="Nielsen M.L."/>
        </authorList>
    </citation>
    <scope>SUMOYLATION [LARGE SCALE ANALYSIS] AT LYS-53; LYS-259; LYS-267 AND LYS-272</scope>
    <scope>IDENTIFICATION BY MASS SPECTROMETRY [LARGE SCALE ANALYSIS]</scope>
</reference>
<reference key="27">
    <citation type="journal article" date="2019" name="Mol. Cell">
        <title>ER and nutrient stress promote assembly of respiratory chain supercomplexes through the PERK-eIF2alpha axis.</title>
        <authorList>
            <person name="Balsa E."/>
            <person name="Soustek M.S."/>
            <person name="Thomas A."/>
            <person name="Cogliati S."/>
            <person name="Garcia-Poyatos C."/>
            <person name="Martin-Garcia E."/>
            <person name="Jedrychowski M."/>
            <person name="Gygi S.P."/>
            <person name="Enriquez J.A."/>
            <person name="Puigserver P."/>
        </authorList>
    </citation>
    <scope>FUNCTION</scope>
    <scope>INDUCTION</scope>
</reference>
<reference key="28">
    <citation type="journal article" date="2021" name="Mol. Psychiatry">
        <title>Structural interaction between DISC1 and ATF4 underlying transcriptional and synaptic dysregulation in an iPSC model of mental disorders.</title>
        <authorList>
            <person name="Wang X."/>
            <person name="Ye F."/>
            <person name="Wen Z."/>
            <person name="Guo Z."/>
            <person name="Yu C."/>
            <person name="Huang W.K."/>
            <person name="Rojas Ringeling F."/>
            <person name="Su Y."/>
            <person name="Zheng W."/>
            <person name="Zhou G."/>
            <person name="Christian K.M."/>
            <person name="Song H."/>
            <person name="Zhang M."/>
            <person name="Ming G.L."/>
        </authorList>
    </citation>
    <scope>FUNCTION</scope>
    <scope>SUBCELLULAR LOCATION</scope>
</reference>
<reference key="29">
    <citation type="journal article" date="2020" name="Nature">
        <title>A pathway coordinated by DELE1 relays mitochondrial stress to the cytosol.</title>
        <authorList>
            <person name="Fessler E."/>
            <person name="Eckl E.M."/>
            <person name="Schmitt S."/>
            <person name="Mancilla I.A."/>
            <person name="Meyer-Bender M.F."/>
            <person name="Hanf M."/>
            <person name="Philippou-Massier J."/>
            <person name="Krebs S."/>
            <person name="Zischka H."/>
            <person name="Jae L.T."/>
        </authorList>
    </citation>
    <scope>FUNCTION</scope>
</reference>
<reference key="30">
    <citation type="journal article" date="2020" name="Nature">
        <title>Mitochondrial stress is relayed to the cytosol by an OMA1-DELE1-HRI pathway.</title>
        <authorList>
            <person name="Guo X."/>
            <person name="Aviles G."/>
            <person name="Liu Y."/>
            <person name="Tian R."/>
            <person name="Unger B.A."/>
            <person name="Lin Y.T."/>
            <person name="Wiita A.P."/>
            <person name="Xu K."/>
            <person name="Correia M.A."/>
            <person name="Kampmann M."/>
        </authorList>
    </citation>
    <scope>FUNCTION</scope>
</reference>
<reference key="31">
    <citation type="journal article" date="2021" name="Science">
        <title>QRICH1 dictates the outcome of ER stress through transcriptional control of proteostasis.</title>
        <authorList>
            <person name="You K."/>
            <person name="Wang L."/>
            <person name="Chou C.H."/>
            <person name="Liu K."/>
            <person name="Nakata T."/>
            <person name="Jaiswal A."/>
            <person name="Yao J."/>
            <person name="Lefkovith A."/>
            <person name="Omar A."/>
            <person name="Perrigoue J.G."/>
            <person name="Towne J.E."/>
            <person name="Regev A."/>
            <person name="Graham D.B."/>
            <person name="Xavier R.J."/>
        </authorList>
    </citation>
    <scope>FUNCTION</scope>
    <scope>INDUCTION BY ER STRESS</scope>
</reference>
<reference key="32">
    <citation type="journal article" date="2001" name="J. Biol. Chem.">
        <title>Crystal structure of the CCAAT box/enhancer-binding protein beta activating transcription factor-4 basic leucine zipper heterodimer in the absence of DNA.</title>
        <authorList>
            <person name="Podust L.M."/>
            <person name="Krezel A.M."/>
            <person name="Kim Y."/>
        </authorList>
    </citation>
    <scope>X-RAY CRYSTALLOGRAPHY (2.6 ANGSTROMS) OF 279-341 IN COMPLEX WITH MOUSE CEBPB</scope>
    <scope>INTERACTION WITH CEBPB</scope>
    <scope>DNA-BINDING</scope>
</reference>
<comment type="function">
    <text evidence="2 8 9 12 15 16 18 23 24 25 26 27 28">Transcription factor that binds the cAMP response element (CRE) (consensus: 5'-GTGACGT[AC][AG]-3') and displays two biological functions, as regulator of metabolic and redox processes under normal cellular conditions, and as master transcription factor during integrated stress response (ISR) (PubMed:16682973, PubMed:17684156, PubMed:31023583, PubMed:31444471, PubMed:32132707). Binds to asymmetric CRE's as a heterodimer and to palindromic CRE's as a homodimer (By similarity). Core effector of the ISR, which is required for adaptation to various stress such as endoplasmic reticulum (ER) stress, amino acid starvation, mitochondrial stress or oxidative stress (PubMed:31023583, PubMed:32132707). During ISR, ATF4 translation is induced via an alternative ribosome translation re-initiation mechanism in response to EIF2S1/eIF-2-alpha phosphorylation, and stress-induced ATF4 acts as a master transcription factor of stress-responsive genes in order to promote cell recovery (PubMed:31023583, PubMed:32132706, PubMed:32132707). Promotes the transcription of genes linked to amino acid sufficiency and resistance to oxidative stress to protect cells against metabolic consequences of ER oxidation (By similarity). Activates the transcription of NLRP1, possibly in concert with other factors in response to ER stress (PubMed:26086088). Activates the transcription of asparagine synthetase (ASNS) in response to amino acid deprivation or ER stress (PubMed:11960987). However, when associated with DDIT3/CHOP, the transcriptional activation of the ASNS gene is inhibited in response to amino acid deprivation (PubMed:18940792). Together with DDIT3/CHOP, mediates programmed cell death by promoting the expression of genes involved in cellular amino acid metabolic processes, mRNA translation and the terminal unfolded protein response (terminal UPR), a cellular response that elicits programmed cell death when ER stress is prolonged and unresolved (By similarity). Activates the expression of COX7A2L/SCAF1 downstream of the EIF2AK3/PERK-mediated unfolded protein response, thereby promoting formation of respiratory chain supercomplexes and increasing mitochondrial oxidative phosphorylation (PubMed:31023583). Together with DDIT3/CHOP, activates the transcription of the IRS-regulator TRIB3 and promotes ER stress-induced neuronal cell death by regulating the expression of BBC3/PUMA in response to ER stress (PubMed:15775988). May cooperate with the UPR transcriptional regulator QRICH1 to regulate ER protein homeostasis which is critical for cell viability in response to ER stress (PubMed:33384352). In the absence of stress, ATF4 translation is at low levels and it is required for normal metabolic processes such as embryonic lens formation, fetal liver hematopoiesis, bone development and synaptic plasticity (By similarity). Acts as a regulator of osteoblast differentiation in response to phosphorylation by RPS6KA3/RSK2: phosphorylation in osteoblasts enhances transactivation activity and promotes expression of osteoblast-specific genes and post-transcriptionally regulates the synthesis of Type I collagen, the main constituent of the bone matrix (PubMed:15109498). Cooperates with FOXO1 in osteoblasts to regulate glucose homeostasis through suppression of beta-cell production and decrease in insulin production (By similarity). Activates transcription of SIRT4 (By similarity). Regulates the circadian expression of the core clock component PER2 and the serotonin transporter SLC6A4 (By similarity). Binds in a circadian time-dependent manner to the cAMP response elements (CRE) in the SLC6A4 and PER2 promoters and periodically activates the transcription of these genes (By similarity). Mainly acts as a transcriptional activator in cellular stress adaptation, but it can also act as a transcriptional repressor: acts as a regulator of synaptic plasticity by repressing transcription, thereby inhibiting induction and maintenance of long-term memory (By similarity). Regulates synaptic functions via interaction with DISC1 in neurons, which inhibits ATF4 transcription factor activity by disrupting ATF4 dimerization and DNA-binding (PubMed:31444471).</text>
</comment>
<comment type="function">
    <text evidence="17">(Microbial infection) Binds to a Tax-responsive enhancer element in the long terminal repeat of HTLV-I.</text>
</comment>
<comment type="subunit">
    <text evidence="2 3 6 13 14 15 18 19 20 21">Binds DNA as a homodimer and as a heterodimer (PubMed:11018027). Heterodimer; heterodimerizes with CEBPB (PubMed:11018027). Heterodimer; heterodimerizes with DDIT3/CHOP (PubMed:18940792). Interacts with CEP290 (via an N-terminal region) (PubMed:16682973). Interacts with NEK6, DAPK2 (isoform 2) and ZIPK/DAPK3 (PubMed:20873783, PubMed:21408167). Interacts (via its leucine zipper domain) with GABBR1 and GABBR2 (via their C-termini) (By similarity). Forms a heterodimer with TXLNG in osteoblasts (PubMed:15911876). Interacts (via its DNA binding domain) with FOXO1 (C-terminal half); the interaction occurs in osteoblasts and regulates glucose homeostasis through suppression of beta-cell proliferation and a decrease in insulin production (By similarity). Interacts with SATB2; the interaction results in enhanced DNA binding and transactivation by these transcription factors (By similarity). Interacts with ABRAXAS2 (PubMed:22974638). Interacts with TRIB3, inhibiting the transactivation activity of ATF4 (By similarity). Interacts with DISC1; which inhibits ATF4 transcription factor activity by disrupting ATF4 dimerization and DNA-binding (By similarity). Interacts with EP300/p300; EP300/p300 stabilizes ATF4 and increases its transcriptional activity independently of its catalytic activity by preventing its ubiquitination (PubMed:16219772).</text>
</comment>
<comment type="interaction">
    <interactant intactId="EBI-492498">
        <id>P18848</id>
    </interactant>
    <interactant intactId="EBI-541426">
        <id>Q9BXS5</id>
        <label>AP1M1</label>
    </interactant>
    <organismsDiffer>false</organismsDiffer>
    <experiments>3</experiments>
</comment>
<comment type="interaction">
    <interactant intactId="EBI-492498">
        <id>P18848</id>
    </interactant>
    <interactant intactId="EBI-1170906">
        <id>P15336</id>
        <label>ATF2</label>
    </interactant>
    <organismsDiffer>false</organismsDiffer>
    <experiments>2</experiments>
</comment>
<comment type="interaction">
    <interactant intactId="EBI-492498">
        <id>P18848</id>
    </interactant>
    <interactant intactId="EBI-712767">
        <id>P18847</id>
        <label>ATF3</label>
    </interactant>
    <organismsDiffer>false</organismsDiffer>
    <experiments>9</experiments>
</comment>
<comment type="interaction">
    <interactant intactId="EBI-492498">
        <id>P18848</id>
    </interactant>
    <interactant intactId="EBI-492498">
        <id>P18848</id>
        <label>ATF4</label>
    </interactant>
    <organismsDiffer>false</organismsDiffer>
    <experiments>2</experiments>
</comment>
<comment type="interaction">
    <interactant intactId="EBI-492498">
        <id>P18848</id>
    </interactant>
    <interactant intactId="EBI-749503">
        <id>Q16520</id>
        <label>BATF</label>
    </interactant>
    <organismsDiffer>false</organismsDiffer>
    <experiments>3</experiments>
</comment>
<comment type="interaction">
    <interactant intactId="EBI-492498">
        <id>P18848</id>
    </interactant>
    <interactant intactId="EBI-10312707">
        <id>Q9NR55</id>
        <label>BATF3</label>
    </interactant>
    <organismsDiffer>false</organismsDiffer>
    <experiments>2</experiments>
</comment>
<comment type="interaction">
    <interactant intactId="EBI-492498">
        <id>P18848</id>
    </interactant>
    <interactant intactId="EBI-10229433">
        <id>Q13515</id>
        <label>BFSP2</label>
    </interactant>
    <organismsDiffer>false</organismsDiffer>
    <experiments>11</experiments>
</comment>
<comment type="interaction">
    <interactant intactId="EBI-492498">
        <id>P18848</id>
    </interactant>
    <interactant intactId="EBI-16429247">
        <id>A0A0S2Z507</id>
        <label>BTRC</label>
    </interactant>
    <organismsDiffer>false</organismsDiffer>
    <experiments>6</experiments>
</comment>
<comment type="interaction">
    <interactant intactId="EBI-492498">
        <id>P18848</id>
    </interactant>
    <interactant intactId="EBI-16429269">
        <id>B7Z3H4</id>
        <label>BTRC</label>
    </interactant>
    <organismsDiffer>false</organismsDiffer>
    <experiments>3</experiments>
</comment>
<comment type="interaction">
    <interactant intactId="EBI-492498">
        <id>P18848</id>
    </interactant>
    <interactant intactId="EBI-307461">
        <id>Q9Y297</id>
        <label>BTRC</label>
    </interactant>
    <organismsDiffer>false</organismsDiffer>
    <experiments>21</experiments>
</comment>
<comment type="interaction">
    <interactant intactId="EBI-492498">
        <id>P18848</id>
    </interactant>
    <interactant intactId="EBI-8826333">
        <id>Q9Y297-2</id>
        <label>BTRC</label>
    </interactant>
    <organismsDiffer>false</organismsDiffer>
    <experiments>5</experiments>
</comment>
<comment type="interaction">
    <interactant intactId="EBI-492498">
        <id>P18848</id>
    </interactant>
    <interactant intactId="EBI-718729">
        <id>P55212</id>
        <label>CASP6</label>
    </interactant>
    <organismsDiffer>false</organismsDiffer>
    <experiments>3</experiments>
</comment>
<comment type="interaction">
    <interactant intactId="EBI-492498">
        <id>P18848</id>
    </interactant>
    <interactant intactId="EBI-711501">
        <id>Q9BWC9</id>
        <label>CCDC106</label>
    </interactant>
    <organismsDiffer>false</organismsDiffer>
    <experiments>14</experiments>
</comment>
<comment type="interaction">
    <interactant intactId="EBI-492498">
        <id>P18848</id>
    </interactant>
    <interactant intactId="EBI-1172054">
        <id>P49715</id>
        <label>CEBPA</label>
    </interactant>
    <organismsDiffer>false</organismsDiffer>
    <experiments>4</experiments>
</comment>
<comment type="interaction">
    <interactant intactId="EBI-492498">
        <id>P18848</id>
    </interactant>
    <interactant intactId="EBI-969696">
        <id>P17676</id>
        <label>CEBPB</label>
    </interactant>
    <organismsDiffer>false</organismsDiffer>
    <experiments>2</experiments>
</comment>
<comment type="interaction">
    <interactant intactId="EBI-492498">
        <id>P18848</id>
    </interactant>
    <interactant intactId="EBI-7962058">
        <id>P49716</id>
        <label>CEBPD</label>
    </interactant>
    <organismsDiffer>false</organismsDiffer>
    <experiments>2</experiments>
</comment>
<comment type="interaction">
    <interactant intactId="EBI-492498">
        <id>P18848</id>
    </interactant>
    <interactant intactId="EBI-3907048">
        <id>Q15744</id>
        <label>CEBPE</label>
    </interactant>
    <organismsDiffer>false</organismsDiffer>
    <experiments>2</experiments>
</comment>
<comment type="interaction">
    <interactant intactId="EBI-492498">
        <id>P18848</id>
    </interactant>
    <interactant intactId="EBI-740209">
        <id>P53567</id>
        <label>CEBPG</label>
    </interactant>
    <organismsDiffer>false</organismsDiffer>
    <experiments>16</experiments>
</comment>
<comment type="interaction">
    <interactant intactId="EBI-492498">
        <id>P18848</id>
    </interactant>
    <interactant intactId="EBI-11123098">
        <id>Q9Y592-2</id>
        <label>CEP83</label>
    </interactant>
    <organismsDiffer>false</organismsDiffer>
    <experiments>3</experiments>
</comment>
<comment type="interaction">
    <interactant intactId="EBI-492498">
        <id>P18848</id>
    </interactant>
    <interactant intactId="EBI-632965">
        <id>Q9NS37</id>
        <label>CREBZF</label>
    </interactant>
    <organismsDiffer>false</organismsDiffer>
    <experiments>7</experiments>
</comment>
<comment type="interaction">
    <interactant intactId="EBI-492498">
        <id>P18848</id>
    </interactant>
    <interactant intactId="EBI-9693115">
        <id>Q9UIK4-2</id>
        <label>DAPK2</label>
    </interactant>
    <organismsDiffer>false</organismsDiffer>
    <experiments>2</experiments>
</comment>
<comment type="interaction">
    <interactant intactId="EBI-492498">
        <id>P18848</id>
    </interactant>
    <interactant intactId="EBI-742651">
        <id>P35638</id>
        <label>DDIT3</label>
    </interactant>
    <organismsDiffer>false</organismsDiffer>
    <experiments>5</experiments>
</comment>
<comment type="interaction">
    <interactant intactId="EBI-492498">
        <id>P18848</id>
    </interactant>
    <interactant intactId="EBI-529989">
        <id>Q9NRI5</id>
        <label>DISC1</label>
    </interactant>
    <organismsDiffer>false</organismsDiffer>
    <experiments>4</experiments>
</comment>
<comment type="interaction">
    <interactant intactId="EBI-492498">
        <id>P18848</id>
    </interactant>
    <interactant intactId="EBI-1045313">
        <id>Q9NV70</id>
        <label>EXOC1</label>
    </interactant>
    <organismsDiffer>false</organismsDiffer>
    <experiments>3</experiments>
</comment>
<comment type="interaction">
    <interactant intactId="EBI-492498">
        <id>P18848</id>
    </interactant>
    <interactant intactId="EBI-852851">
        <id>P01100</id>
        <label>FOS</label>
    </interactant>
    <organismsDiffer>false</organismsDiffer>
    <experiments>4</experiments>
</comment>
<comment type="interaction">
    <interactant intactId="EBI-492498">
        <id>P18848</id>
    </interactant>
    <interactant intactId="EBI-744510">
        <id>P15407</id>
        <label>FOSL1</label>
    </interactant>
    <organismsDiffer>false</organismsDiffer>
    <experiments>2</experiments>
</comment>
<comment type="interaction">
    <interactant intactId="EBI-492498">
        <id>P18848</id>
    </interactant>
    <interactant intactId="EBI-746252">
        <id>Q96CN9</id>
        <label>GCC1</label>
    </interactant>
    <organismsDiffer>false</organismsDiffer>
    <experiments>6</experiments>
</comment>
<comment type="interaction">
    <interactant intactId="EBI-492498">
        <id>P18848</id>
    </interactant>
    <interactant intactId="EBI-6164177">
        <id>Q92805</id>
        <label>GOLGA1</label>
    </interactant>
    <organismsDiffer>false</organismsDiffer>
    <experiments>11</experiments>
</comment>
<comment type="interaction">
    <interactant intactId="EBI-492498">
        <id>P18848</id>
    </interactant>
    <interactant intactId="EBI-10181276">
        <id>Q0D2H9</id>
        <label>GOLGA8DP</label>
    </interactant>
    <organismsDiffer>false</organismsDiffer>
    <experiments>3</experiments>
</comment>
<comment type="interaction">
    <interactant intactId="EBI-492498">
        <id>P18848</id>
    </interactant>
    <interactant intactId="EBI-10181260">
        <id>Q08AF8</id>
        <label>GOLGA8G</label>
    </interactant>
    <organismsDiffer>false</organismsDiffer>
    <experiments>7</experiments>
</comment>
<comment type="interaction">
    <interactant intactId="EBI-492498">
        <id>P18848</id>
    </interactant>
    <interactant intactId="EBI-713355">
        <id>Q13227</id>
        <label>GPS2</label>
    </interactant>
    <organismsDiffer>false</organismsDiffer>
    <experiments>13</experiments>
</comment>
<comment type="interaction">
    <interactant intactId="EBI-492498">
        <id>P18848</id>
    </interactant>
    <interactant intactId="EBI-395719">
        <id>Q99871</id>
        <label>HAUS7</label>
    </interactant>
    <organismsDiffer>false</organismsDiffer>
    <experiments>3</experiments>
</comment>
<comment type="interaction">
    <interactant intactId="EBI-492498">
        <id>P18848</id>
    </interactant>
    <interactant intactId="EBI-1248415">
        <id>Q8WYK2</id>
        <label>JDP2</label>
    </interactant>
    <organismsDiffer>false</organismsDiffer>
    <experiments>3</experiments>
</comment>
<comment type="interaction">
    <interactant intactId="EBI-492498">
        <id>P18848</id>
    </interactant>
    <interactant intactId="EBI-852823">
        <id>P05412</id>
        <label>JUN</label>
    </interactant>
    <organismsDiffer>false</organismsDiffer>
    <experiments>4</experiments>
</comment>
<comment type="interaction">
    <interactant intactId="EBI-492498">
        <id>P18848</id>
    </interactant>
    <interactant intactId="EBI-748062">
        <id>P17275</id>
        <label>JUNB</label>
    </interactant>
    <organismsDiffer>false</organismsDiffer>
    <experiments>3</experiments>
</comment>
<comment type="interaction">
    <interactant intactId="EBI-492498">
        <id>P18848</id>
    </interactant>
    <interactant intactId="EBI-21591415">
        <id>P13473-2</id>
        <label>LAMP2</label>
    </interactant>
    <organismsDiffer>false</organismsDiffer>
    <experiments>3</experiments>
</comment>
<comment type="interaction">
    <interactant intactId="EBI-492498">
        <id>P18848</id>
    </interactant>
    <interactant intactId="EBI-740738">
        <id>O95751</id>
        <label>LDOC1</label>
    </interactant>
    <organismsDiffer>false</organismsDiffer>
    <experiments>10</experiments>
</comment>
<comment type="interaction">
    <interactant intactId="EBI-492498">
        <id>P18848</id>
    </interactant>
    <interactant intactId="EBI-2805091">
        <id>O75444</id>
        <label>MAF</label>
    </interactant>
    <organismsDiffer>false</organismsDiffer>
    <experiments>3</experiments>
</comment>
<comment type="interaction">
    <interactant intactId="EBI-492498">
        <id>P18848</id>
    </interactant>
    <interactant intactId="EBI-713627">
        <id>Q96NT1</id>
        <label>NAP1L5</label>
    </interactant>
    <organismsDiffer>false</organismsDiffer>
    <experiments>3</experiments>
</comment>
<comment type="interaction">
    <interactant intactId="EBI-492498">
        <id>P18848</id>
    </interactant>
    <interactant intactId="EBI-715849">
        <id>O14777</id>
        <label>NDC80</label>
    </interactant>
    <organismsDiffer>false</organismsDiffer>
    <experiments>8</experiments>
</comment>
<comment type="interaction">
    <interactant intactId="EBI-492498">
        <id>P18848</id>
    </interactant>
    <interactant intactId="EBI-2007911">
        <id>Q16236</id>
        <label>NFE2L2</label>
    </interactant>
    <organismsDiffer>false</organismsDiffer>
    <experiments>8</experiments>
</comment>
<comment type="interaction">
    <interactant intactId="EBI-492498">
        <id>P18848</id>
    </interactant>
    <interactant intactId="EBI-394729">
        <id>P19387</id>
        <label>POLR2C</label>
    </interactant>
    <organismsDiffer>false</organismsDiffer>
    <experiments>6</experiments>
</comment>
<comment type="interaction">
    <interactant intactId="EBI-492498">
        <id>P18848</id>
    </interactant>
    <interactant intactId="EBI-5280197">
        <id>O75400-2</id>
        <label>PRPF40A</label>
    </interactant>
    <organismsDiffer>false</organismsDiffer>
    <experiments>3</experiments>
</comment>
<comment type="interaction">
    <interactant intactId="EBI-492498">
        <id>P18848</id>
    </interactant>
    <interactant intactId="EBI-2561646">
        <id>Q86UD0</id>
        <label>SAPCD2</label>
    </interactant>
    <organismsDiffer>false</organismsDiffer>
    <experiments>3</experiments>
</comment>
<comment type="interaction">
    <interactant intactId="EBI-492498">
        <id>P18848</id>
    </interactant>
    <interactant intactId="EBI-2623095">
        <id>Q9Y371</id>
        <label>SH3GLB1</label>
    </interactant>
    <organismsDiffer>false</organismsDiffer>
    <experiments>3</experiments>
</comment>
<comment type="interaction">
    <interactant intactId="EBI-492498">
        <id>P18848</id>
    </interactant>
    <interactant intactId="EBI-1056629">
        <id>A2RTX5</id>
        <label>TARS3</label>
    </interactant>
    <organismsDiffer>false</organismsDiffer>
    <experiments>3</experiments>
</comment>
<comment type="interaction">
    <interactant intactId="EBI-492498">
        <id>P18848</id>
    </interactant>
    <interactant intactId="EBI-11899977">
        <id>Q3MII6</id>
        <label>TBC1D25</label>
    </interactant>
    <organismsDiffer>false</organismsDiffer>
    <experiments>2</experiments>
</comment>
<comment type="interaction">
    <interactant intactId="EBI-492498">
        <id>P18848</id>
    </interactant>
    <interactant intactId="EBI-492476">
        <id>Q96RU7</id>
        <label>TRIB3</label>
    </interactant>
    <organismsDiffer>false</organismsDiffer>
    <experiments>16</experiments>
</comment>
<comment type="interaction">
    <interactant intactId="EBI-492498">
        <id>P18848</id>
    </interactant>
    <interactant intactId="EBI-711909">
        <id>P02766</id>
        <label>TTR</label>
    </interactant>
    <organismsDiffer>false</organismsDiffer>
    <experiments>3</experiments>
</comment>
<comment type="interaction">
    <interactant intactId="EBI-492498">
        <id>P18848</id>
    </interactant>
    <interactant intactId="EBI-77359">
        <id>O54784</id>
        <label>Dapk3</label>
    </interactant>
    <organismsDiffer>true</organismsDiffer>
    <experiments>2</experiments>
</comment>
<comment type="subcellular location">
    <subcellularLocation>
        <location evidence="15 21 22 25">Nucleus</location>
    </subcellularLocation>
    <subcellularLocation>
        <location evidence="14">Nucleus speckle</location>
    </subcellularLocation>
    <subcellularLocation>
        <location evidence="3">Cytoplasm</location>
    </subcellularLocation>
    <subcellularLocation>
        <location evidence="3">Cell membrane</location>
    </subcellularLocation>
    <subcellularLocation>
        <location evidence="19">Cytoplasm</location>
        <location evidence="19">Cytoskeleton</location>
        <location evidence="19">Microtubule organizing center</location>
        <location evidence="19">Centrosome</location>
    </subcellularLocation>
    <text evidence="3 14 19">Colocalizes with GABBR1 in hippocampal neuron dendritic membranes (By similarity). Colocalizes with NEK6 at the centrosome (PubMed:20873783). Recruited to nuclear speckles following interaction with EP300/p300 (PubMed:16219772).</text>
</comment>
<comment type="induction">
    <text evidence="24 28 32">Regulated at the translational level in response to various stress such as endoplasmic reticulum stress, amino acid starvation or oxidative stress (PubMed:27629041, PubMed:31023583, PubMed:33384352). In the absence of stress, ribosomes re-initiate translation at an inhibitory open reading frame (uORF) upstream of the ATF4 transcript, which precludes AFT4 translation. In response to stress and subsequent EIF2S1/eIF-2-alpha phosphorylation, ribosomes bypass the inhibitory uORF and re-initiate translation at the AFT4 coding sequence (PubMed:27629041).</text>
</comment>
<comment type="domain">
    <text evidence="7">The BetaTrCP degron motif promotes binding to BTRC when phosphorylated.</text>
</comment>
<comment type="PTM">
    <text evidence="7 14">Ubiquitinated by SCF(BTRC) in response to mTORC1 signal, followed by proteasomal degradation and leading to down-regulate expression of SIRT4 (PubMed:11238952). Interaction with EP300/p300 inhibits ubiquitination by SCF(BTRC) (PubMed:16219772).</text>
</comment>
<comment type="PTM">
    <text evidence="2 9 19 22">Phosphorylation at Ser-245 by RPS6KA3/RSK2 in osteoblasts enhances transactivation activity and promotes osteoblast differentiation (PubMed:15109498). Phosphorylated on the betaTrCP degron motif at Ser-219, followed by phosphorylation at Thr-213, Ser-224, Ser-231, Ser-235 and Ser-248, promoting interaction with BTRC and ubiquitination (By similarity). Phosphorylation is promoted by mTORC1 (By similarity). Phosphorylation at Ser-215 by CK2 decreases its stability (PubMed:23123191). Phosphorylated by NEK6 (PubMed:20873783).</text>
</comment>
<comment type="PTM">
    <text evidence="34">Hydroxylated by PHD3, leading to decreased protein stability.</text>
</comment>
<comment type="similarity">
    <text evidence="33">Belongs to the bZIP family.</text>
</comment>
<comment type="online information" name="Atlas of Genetics and Cytogenetics in Oncology and Haematology">
    <link uri="https://atlasgeneticsoncology.org/gene/44413/ATF4"/>
</comment>
<keyword id="KW-0002">3D-structure</keyword>
<keyword id="KW-0007">Acetylation</keyword>
<keyword id="KW-0010">Activator</keyword>
<keyword id="KW-0090">Biological rhythms</keyword>
<keyword id="KW-1003">Cell membrane</keyword>
<keyword id="KW-0175">Coiled coil</keyword>
<keyword id="KW-0963">Cytoplasm</keyword>
<keyword id="KW-0206">Cytoskeleton</keyword>
<keyword id="KW-0238">DNA-binding</keyword>
<keyword id="KW-0379">Hydroxylation</keyword>
<keyword id="KW-1017">Isopeptide bond</keyword>
<keyword id="KW-0472">Membrane</keyword>
<keyword id="KW-0539">Nucleus</keyword>
<keyword id="KW-0597">Phosphoprotein</keyword>
<keyword id="KW-1267">Proteomics identification</keyword>
<keyword id="KW-1185">Reference proteome</keyword>
<keyword id="KW-0678">Repressor</keyword>
<keyword id="KW-0804">Transcription</keyword>
<keyword id="KW-0805">Transcription regulation</keyword>
<keyword id="KW-0832">Ubl conjugation</keyword>
<protein>
    <recommendedName>
        <fullName evidence="33">Cyclic AMP-dependent transcription factor ATF-4</fullName>
        <shortName evidence="33">cAMP-dependent transcription factor ATF-4</shortName>
    </recommendedName>
    <alternativeName>
        <fullName evidence="31">Activating transcription factor 4</fullName>
    </alternativeName>
    <alternativeName>
        <fullName evidence="29">Cyclic AMP-responsive element-binding protein 2</fullName>
        <shortName evidence="29">CREB-2</shortName>
        <shortName evidence="29">cAMP-responsive element-binding protein 2</shortName>
    </alternativeName>
    <alternativeName>
        <fullName evidence="30">Tax-responsive enhancer element-binding protein 67</fullName>
        <shortName evidence="30">TaxREB67</shortName>
    </alternativeName>
</protein>
<proteinExistence type="evidence at protein level"/>
<organism>
    <name type="scientific">Homo sapiens</name>
    <name type="common">Human</name>
    <dbReference type="NCBI Taxonomy" id="9606"/>
    <lineage>
        <taxon>Eukaryota</taxon>
        <taxon>Metazoa</taxon>
        <taxon>Chordata</taxon>
        <taxon>Craniata</taxon>
        <taxon>Vertebrata</taxon>
        <taxon>Euteleostomi</taxon>
        <taxon>Mammalia</taxon>
        <taxon>Eutheria</taxon>
        <taxon>Euarchontoglires</taxon>
        <taxon>Primates</taxon>
        <taxon>Haplorrhini</taxon>
        <taxon>Catarrhini</taxon>
        <taxon>Hominidae</taxon>
        <taxon>Homo</taxon>
    </lineage>
</organism>
<feature type="chain" id="PRO_0000076584" description="Cyclic AMP-dependent transcription factor ATF-4">
    <location>
        <begin position="1"/>
        <end position="351"/>
    </location>
</feature>
<feature type="domain" description="bZIP" evidence="4">
    <location>
        <begin position="278"/>
        <end position="341"/>
    </location>
</feature>
<feature type="region of interest" description="Disordered" evidence="5">
    <location>
        <begin position="210"/>
        <end position="268"/>
    </location>
</feature>
<feature type="region of interest" description="Basic motif" evidence="4">
    <location>
        <begin position="280"/>
        <end position="300"/>
    </location>
</feature>
<feature type="region of interest" description="Interaction with GABBR1" evidence="1">
    <location>
        <begin position="305"/>
        <end position="341"/>
    </location>
</feature>
<feature type="region of interest" description="Leucine-zipper" evidence="4">
    <location>
        <begin position="306"/>
        <end position="334"/>
    </location>
</feature>
<feature type="coiled-coil region">
    <location>
        <begin position="280"/>
        <end position="340"/>
    </location>
</feature>
<feature type="short sequence motif" description="BetaTrCP degron motif" evidence="7">
    <location>
        <begin position="215"/>
        <end position="224"/>
    </location>
</feature>
<feature type="compositionally biased region" description="Polar residues" evidence="5">
    <location>
        <begin position="230"/>
        <end position="246"/>
    </location>
</feature>
<feature type="modified residue" description="Phosphothreonine" evidence="2">
    <location>
        <position position="213"/>
    </location>
</feature>
<feature type="modified residue" description="Phosphoserine; by CK2" evidence="22">
    <location>
        <position position="215"/>
    </location>
</feature>
<feature type="modified residue" description="Phosphoserine" evidence="2">
    <location>
        <position position="219"/>
    </location>
</feature>
<feature type="modified residue" description="Phosphoserine" evidence="2">
    <location>
        <position position="224"/>
    </location>
</feature>
<feature type="modified residue" description="Phosphoserine" evidence="2">
    <location>
        <position position="231"/>
    </location>
</feature>
<feature type="modified residue" description="Phosphoserine" evidence="2">
    <location>
        <position position="235"/>
    </location>
</feature>
<feature type="modified residue" description="4-hydroxyproline" evidence="2">
    <location>
        <position position="236"/>
    </location>
</feature>
<feature type="modified residue" description="Phosphoserine; by RPS6KA3" evidence="9">
    <location>
        <position position="245"/>
    </location>
</feature>
<feature type="modified residue" description="Phosphoserine" evidence="2">
    <location>
        <position position="248"/>
    </location>
</feature>
<feature type="modified residue" description="N6-acetyllysine" evidence="14">
    <location>
        <position position="311"/>
    </location>
</feature>
<feature type="cross-link" description="Glycyl lysine isopeptide (Lys-Gly) (interchain with G-Cter in SUMO2)" evidence="37">
    <location>
        <position position="53"/>
    </location>
</feature>
<feature type="cross-link" description="Glycyl lysine isopeptide (Lys-Gly) (interchain with G-Cter in SUMO2)" evidence="37">
    <location>
        <position position="259"/>
    </location>
</feature>
<feature type="cross-link" description="Glycyl lysine isopeptide (Lys-Gly) (interchain with G-Cter in SUMO2)" evidence="36 37">
    <location>
        <position position="267"/>
    </location>
</feature>
<feature type="cross-link" description="Glycyl lysine isopeptide (Lys-Gly) (interchain with G-Cter in SUMO2)" evidence="37">
    <location>
        <position position="272"/>
    </location>
</feature>
<feature type="sequence variant" id="VAR_028253" description="In dbSNP:rs4894." evidence="10 11 17">
    <original>Q</original>
    <variation>P</variation>
    <location>
        <position position="22"/>
    </location>
</feature>
<feature type="sequence variant" id="VAR_029259" description="In dbSNP:rs1803323.">
    <original>P</original>
    <variation>A</variation>
    <location>
        <position position="258"/>
    </location>
</feature>
<feature type="sequence variant" id="VAR_014768" description="In dbSNP:rs1803324.">
    <original>E</original>
    <variation>D</variation>
    <location>
        <position position="322"/>
    </location>
</feature>
<feature type="mutagenesis site" description="Increased stability in low oxygen conditions; when associated with A-162, A-164, A-167 and A-174." evidence="16">
    <original>P</original>
    <variation>A</variation>
    <location>
        <position position="156"/>
    </location>
</feature>
<feature type="mutagenesis site" description="Increased stability in low oxygen conditions; when associated with A-156, A-164, A-167 and A-174." evidence="16">
    <original>P</original>
    <variation>A</variation>
    <location>
        <position position="162"/>
    </location>
</feature>
<feature type="mutagenesis site" description="Increased stability in low oxygen conditions; when associated with A-156, A-162, A-167 and A-174." evidence="16">
    <original>P</original>
    <variation>A</variation>
    <location>
        <position position="164"/>
    </location>
</feature>
<feature type="mutagenesis site" description="Increased stability in low oxygen conditions; when associated with A-156, A-162, A-164 and A-174." evidence="16">
    <original>P</original>
    <variation>A</variation>
    <location>
        <position position="167"/>
    </location>
</feature>
<feature type="mutagenesis site" description="Increased stability in low oxygen conditions; when associated with A-156, A-162, A-164 and A-167." evidence="16">
    <original>P</original>
    <variation>A</variation>
    <location>
        <position position="174"/>
    </location>
</feature>
<feature type="mutagenesis site" description="Does not affect phosphorylation by CK2." evidence="22">
    <original>T</original>
    <variation>A</variation>
    <location>
        <position position="213"/>
    </location>
</feature>
<feature type="mutagenesis site" description="Abolished phosphorylation by CK2 leading to increased stability." evidence="22">
    <original>S</original>
    <variation>A</variation>
    <location>
        <position position="215"/>
    </location>
</feature>
<feature type="mutagenesis site" description="Abolished phosphorylation on the betaTrCP degron motif, interaction with BTRC and subsequent ubiquitination." evidence="14">
    <original>S</original>
    <variation>N</variation>
    <location>
        <position position="219"/>
    </location>
</feature>
<feature type="mutagenesis site" description="Abolished phosphorylation by RPS6KA3/RSK2." evidence="9">
    <original>S</original>
    <variation>A</variation>
    <location>
        <position position="245"/>
    </location>
</feature>
<feature type="mutagenesis site" description="Decreased acetylation without affecting ubiquitination by SCF(BTRC)." evidence="14">
    <original>K</original>
    <variation>R</variation>
    <location>
        <position position="311"/>
    </location>
</feature>
<feature type="sequence conflict" description="In Ref. 7; no nucleotide entry." evidence="33" ref="7">
    <original>K</original>
    <variation>R</variation>
    <location>
        <position position="284"/>
    </location>
</feature>
<feature type="sequence conflict" description="In Ref. 7; no nucleotide entry." evidence="33" ref="7">
    <original>T</original>
    <variation>R</variation>
    <location>
        <position position="290"/>
    </location>
</feature>
<feature type="sequence conflict" description="In Ref. 7; no nucleotide entry." evidence="33" ref="7">
    <original>KEI</original>
    <variation>REK</variation>
    <location>
        <begin position="329"/>
        <end position="331"/>
    </location>
</feature>
<feature type="sequence conflict" description="In Ref. 7; no nucleotide entry." evidence="33" ref="7">
    <original>I</original>
    <variation>L</variation>
    <location>
        <position position="338"/>
    </location>
</feature>
<feature type="helix" evidence="38">
    <location>
        <begin position="288"/>
        <end position="340"/>
    </location>
</feature>
<sequence>MTEMSFLSSEVLVGDLMSPFDQSGLGAEESLGLLDDYLEVAKHFKPHGFSSDKAKAGSSEWLAVDGLVSPSNNSKEDAFSGTDWMLEKMDLKEFDLDALLGIDDLETMPDDLLTTLDDTCDLFAPLVQETNKQPPQTVNPIGHLPESLTKPDQVAPFTFLQPLPLSPGVLSSTPDHSFSLELGSEVDITEGDRKPDYTAYVAMIPQCIKEEDTPSDNDSGICMSPESYLGSPQHSPSTRGSPNRSLPSPGVLCGSARPKPYDPPGEKMVAAKVKGEKLDKKLKKMEQNKTAATRYRQKKRAEQEALTGECKELEKKNEALKERADSLAKEIQYLKDLIEEVRKARGKKRVP</sequence>
<dbReference type="EMBL" id="D90209">
    <property type="protein sequence ID" value="BAA14234.1"/>
    <property type="molecule type" value="mRNA"/>
</dbReference>
<dbReference type="EMBL" id="M86842">
    <property type="protein sequence ID" value="AAA52071.1"/>
    <property type="molecule type" value="mRNA"/>
</dbReference>
<dbReference type="EMBL" id="CR456384">
    <property type="protein sequence ID" value="CAG30270.1"/>
    <property type="molecule type" value="mRNA"/>
</dbReference>
<dbReference type="EMBL" id="AL022312">
    <property type="status" value="NOT_ANNOTATED_CDS"/>
    <property type="molecule type" value="Genomic_DNA"/>
</dbReference>
<dbReference type="EMBL" id="CH471095">
    <property type="protein sequence ID" value="EAW60341.1"/>
    <property type="molecule type" value="Genomic_DNA"/>
</dbReference>
<dbReference type="EMBL" id="CH471095">
    <property type="protein sequence ID" value="EAW60342.1"/>
    <property type="molecule type" value="Genomic_DNA"/>
</dbReference>
<dbReference type="EMBL" id="BC008090">
    <property type="protein sequence ID" value="AAH08090.1"/>
    <property type="molecule type" value="mRNA"/>
</dbReference>
<dbReference type="EMBL" id="BC011994">
    <property type="protein sequence ID" value="AAH11994.1"/>
    <property type="molecule type" value="mRNA"/>
</dbReference>
<dbReference type="EMBL" id="BC016855">
    <property type="protein sequence ID" value="AAH16855.1"/>
    <property type="molecule type" value="mRNA"/>
</dbReference>
<dbReference type="EMBL" id="BC022088">
    <property type="protein sequence ID" value="AAH22088.1"/>
    <property type="molecule type" value="mRNA"/>
</dbReference>
<dbReference type="EMBL" id="BC024775">
    <property type="protein sequence ID" value="AAH24775.1"/>
    <property type="molecule type" value="mRNA"/>
</dbReference>
<dbReference type="EMBL" id="BC044895">
    <property type="protein sequence ID" value="AAH44895.1"/>
    <property type="molecule type" value="mRNA"/>
</dbReference>
<dbReference type="EMBL" id="BC073754">
    <property type="protein sequence ID" value="AAH73754.1"/>
    <property type="molecule type" value="mRNA"/>
</dbReference>
<dbReference type="EMBL" id="BC073990">
    <property type="protein sequence ID" value="AAH73990.1"/>
    <property type="molecule type" value="mRNA"/>
</dbReference>
<dbReference type="CCDS" id="CCDS13996.1"/>
<dbReference type="PIR" id="A45377">
    <property type="entry name" value="A45377"/>
</dbReference>
<dbReference type="RefSeq" id="NP_001666.2">
    <property type="nucleotide sequence ID" value="NM_001675.4"/>
</dbReference>
<dbReference type="RefSeq" id="NP_877962.1">
    <property type="nucleotide sequence ID" value="NM_182810.3"/>
</dbReference>
<dbReference type="RefSeq" id="XP_016884296.1">
    <property type="nucleotide sequence ID" value="XM_017028807.1"/>
</dbReference>
<dbReference type="PDB" id="1CI6">
    <property type="method" value="X-ray"/>
    <property type="resolution" value="2.60 A"/>
    <property type="chains" value="A=280-341"/>
</dbReference>
<dbReference type="PDBsum" id="1CI6"/>
<dbReference type="SMR" id="P18848"/>
<dbReference type="BioGRID" id="106958">
    <property type="interactions" value="96"/>
</dbReference>
<dbReference type="ComplexPortal" id="CPX-6385">
    <property type="entry name" value="bZIP transcription factor complex, ATF3-ATF4"/>
</dbReference>
<dbReference type="ComplexPortal" id="CPX-6408">
    <property type="entry name" value="bZIP transcription factor complex, ATF2-ATF4"/>
</dbReference>
<dbReference type="ComplexPortal" id="CPX-6521">
    <property type="entry name" value="bZIP transcription factor complex, ATF4-ATF4"/>
</dbReference>
<dbReference type="ComplexPortal" id="CPX-6522">
    <property type="entry name" value="bZIP transcription factor complex, ATF4-BATF"/>
</dbReference>
<dbReference type="ComplexPortal" id="CPX-6523">
    <property type="entry name" value="bZIP transcription factor complex, ATF4-BATF2"/>
</dbReference>
<dbReference type="ComplexPortal" id="CPX-6524">
    <property type="entry name" value="bZIP transcription factor complex, ATF4-BATF3"/>
</dbReference>
<dbReference type="ComplexPortal" id="CPX-6525">
    <property type="entry name" value="bZIP transcription factor complex, ATF4-CEBPA"/>
</dbReference>
<dbReference type="ComplexPortal" id="CPX-6526">
    <property type="entry name" value="bZIP transcription factor complex, ATF4-CEBPB"/>
</dbReference>
<dbReference type="ComplexPortal" id="CPX-6527">
    <property type="entry name" value="bZIP transcription factor complex, ATF4-CEBPG"/>
</dbReference>
<dbReference type="ComplexPortal" id="CPX-6528">
    <property type="entry name" value="bZIP transcription factor complex, ATF4-CEBPD"/>
</dbReference>
<dbReference type="ComplexPortal" id="CPX-6529">
    <property type="entry name" value="bZIP transcription factor complex, ATF4-CEBPE"/>
</dbReference>
<dbReference type="ComplexPortal" id="CPX-6541">
    <property type="entry name" value="bZIP transcription factor complex, ATF4-CREB3"/>
</dbReference>
<dbReference type="ComplexPortal" id="CPX-6542">
    <property type="entry name" value="bZIP transcription factor complex, ATF4-CREBZF"/>
</dbReference>
<dbReference type="ComplexPortal" id="CPX-6543">
    <property type="entry name" value="bZIP transcription factor complex, ATF4-DDIT3"/>
</dbReference>
<dbReference type="ComplexPortal" id="CPX-6562">
    <property type="entry name" value="bZIP transcription factor complex, ATF4-JUN"/>
</dbReference>
<dbReference type="ComplexPortal" id="CPX-6563">
    <property type="entry name" value="bZIP transcription factor complex, ATF4-JUNB"/>
</dbReference>
<dbReference type="ComplexPortal" id="CPX-6564">
    <property type="entry name" value="bZIP transcription factor complex, ATF4-FOS"/>
</dbReference>
<dbReference type="ComplexPortal" id="CPX-6565">
    <property type="entry name" value="bZIP transcription factor complex, ATF4-FOSL1"/>
</dbReference>
<dbReference type="ComplexPortal" id="CPX-6566">
    <property type="entry name" value="bZIP transcription factor complex, ATF4-MAF"/>
</dbReference>
<dbReference type="ComplexPortal" id="CPX-6567">
    <property type="entry name" value="bZIP transcription factor complex, ATF4-MAFB"/>
</dbReference>
<dbReference type="ComplexPortal" id="CPX-6568">
    <property type="entry name" value="bZIP transcription factor complex, ATF4-NFE2"/>
</dbReference>
<dbReference type="ComplexPortal" id="CPX-6569">
    <property type="entry name" value="bZIP transcription factor complex, ATF4-NFE2L1"/>
</dbReference>
<dbReference type="ComplexPortal" id="CPX-6570">
    <property type="entry name" value="bZIP transcription factor complex, ATF4-NFE2L2"/>
</dbReference>
<dbReference type="ComplexPortal" id="CPX-6572">
    <property type="entry name" value="bZIP transcription factor complex, ATF4-NFE2L3"/>
</dbReference>
<dbReference type="ComplexPortal" id="CPX-8">
    <property type="entry name" value="bZIP transcription factor complex, ATF4-CREB1"/>
</dbReference>
<dbReference type="ComplexPortal" id="CPX-9">
    <property type="entry name" value="bZIP transcription factor complex, ATF1-ATF4"/>
</dbReference>
<dbReference type="CORUM" id="P18848"/>
<dbReference type="DIP" id="DIP-354N"/>
<dbReference type="ELM" id="P18848"/>
<dbReference type="FunCoup" id="P18848">
    <property type="interactions" value="2624"/>
</dbReference>
<dbReference type="IntAct" id="P18848">
    <property type="interactions" value="80"/>
</dbReference>
<dbReference type="MINT" id="P18848"/>
<dbReference type="STRING" id="9606.ENSP00000336790"/>
<dbReference type="BindingDB" id="P18848"/>
<dbReference type="DrugBank" id="DB00852">
    <property type="generic name" value="Pseudoephedrine"/>
</dbReference>
<dbReference type="GlyGen" id="P18848">
    <property type="glycosylation" value="1 site, 1 O-linked glycan (1 site)"/>
</dbReference>
<dbReference type="iPTMnet" id="P18848"/>
<dbReference type="PhosphoSitePlus" id="P18848"/>
<dbReference type="BioMuta" id="ATF4"/>
<dbReference type="DMDM" id="116241262"/>
<dbReference type="jPOST" id="P18848"/>
<dbReference type="MassIVE" id="P18848"/>
<dbReference type="PaxDb" id="9606-ENSP00000336790"/>
<dbReference type="PeptideAtlas" id="P18848"/>
<dbReference type="ProteomicsDB" id="53615"/>
<dbReference type="ABCD" id="P18848">
    <property type="antibodies" value="1 sequenced antibody"/>
</dbReference>
<dbReference type="Antibodypedia" id="12687">
    <property type="antibodies" value="1128 antibodies from 46 providers"/>
</dbReference>
<dbReference type="DNASU" id="468"/>
<dbReference type="Ensembl" id="ENST00000337304.2">
    <property type="protein sequence ID" value="ENSP00000336790.2"/>
    <property type="gene ID" value="ENSG00000128272.19"/>
</dbReference>
<dbReference type="Ensembl" id="ENST00000396680.3">
    <property type="protein sequence ID" value="ENSP00000379912.1"/>
    <property type="gene ID" value="ENSG00000128272.19"/>
</dbReference>
<dbReference type="Ensembl" id="ENST00000404241.7">
    <property type="protein sequence ID" value="ENSP00000384587.2"/>
    <property type="gene ID" value="ENSG00000128272.19"/>
</dbReference>
<dbReference type="Ensembl" id="ENST00000674568.2">
    <property type="protein sequence ID" value="ENSP00000501783.2"/>
    <property type="gene ID" value="ENSG00000128272.19"/>
</dbReference>
<dbReference type="Ensembl" id="ENST00000674835.2">
    <property type="protein sequence ID" value="ENSP00000502610.2"/>
    <property type="gene ID" value="ENSG00000128272.19"/>
</dbReference>
<dbReference type="Ensembl" id="ENST00000674920.3">
    <property type="protein sequence ID" value="ENSP00000501863.1"/>
    <property type="gene ID" value="ENSG00000128272.19"/>
</dbReference>
<dbReference type="Ensembl" id="ENST00000676346.2">
    <property type="protein sequence ID" value="ENSP00000502400.2"/>
    <property type="gene ID" value="ENSG00000128272.19"/>
</dbReference>
<dbReference type="Ensembl" id="ENST00000679776.1">
    <property type="protein sequence ID" value="ENSP00000505360.1"/>
    <property type="gene ID" value="ENSG00000128272.19"/>
</dbReference>
<dbReference type="GeneID" id="468"/>
<dbReference type="KEGG" id="hsa:468"/>
<dbReference type="MANE-Select" id="ENST00000674920.3">
    <property type="protein sequence ID" value="ENSP00000501863.1"/>
    <property type="RefSeq nucleotide sequence ID" value="NM_182810.3"/>
    <property type="RefSeq protein sequence ID" value="NP_877962.1"/>
</dbReference>
<dbReference type="UCSC" id="uc003axz.4">
    <property type="organism name" value="human"/>
</dbReference>
<dbReference type="AGR" id="HGNC:786"/>
<dbReference type="CTD" id="468"/>
<dbReference type="DisGeNET" id="468"/>
<dbReference type="GeneCards" id="ATF4"/>
<dbReference type="HGNC" id="HGNC:786">
    <property type="gene designation" value="ATF4"/>
</dbReference>
<dbReference type="HPA" id="ENSG00000128272">
    <property type="expression patterns" value="Low tissue specificity"/>
</dbReference>
<dbReference type="MalaCards" id="ATF4"/>
<dbReference type="MIM" id="604064">
    <property type="type" value="gene"/>
</dbReference>
<dbReference type="neXtProt" id="NX_P18848"/>
<dbReference type="OpenTargets" id="ENSG00000128272"/>
<dbReference type="PharmGKB" id="PA25086"/>
<dbReference type="VEuPathDB" id="HostDB:ENSG00000128272"/>
<dbReference type="eggNOG" id="KOG4571">
    <property type="taxonomic scope" value="Eukaryota"/>
</dbReference>
<dbReference type="GeneTree" id="ENSGT00530000063801"/>
<dbReference type="HOGENOM" id="CLU_055748_1_0_1"/>
<dbReference type="InParanoid" id="P18848"/>
<dbReference type="OMA" id="ATIQEFH"/>
<dbReference type="OrthoDB" id="5847285at2759"/>
<dbReference type="PAN-GO" id="P18848">
    <property type="GO annotations" value="6 GO annotations based on evolutionary models"/>
</dbReference>
<dbReference type="PhylomeDB" id="P18848"/>
<dbReference type="TreeFam" id="TF316136"/>
<dbReference type="PathwayCommons" id="P18848"/>
<dbReference type="Reactome" id="R-HSA-380994">
    <property type="pathway name" value="ATF4 activates genes in response to endoplasmic reticulum stress"/>
</dbReference>
<dbReference type="Reactome" id="R-HSA-381042">
    <property type="pathway name" value="PERK regulates gene expression"/>
</dbReference>
<dbReference type="Reactome" id="R-HSA-381183">
    <property type="pathway name" value="ATF6 (ATF6-alpha) activates chaperone genes"/>
</dbReference>
<dbReference type="Reactome" id="R-HSA-9633012">
    <property type="pathway name" value="Response of EIF2AK4 (GCN2) to amino acid deficiency"/>
</dbReference>
<dbReference type="Reactome" id="R-HSA-9648895">
    <property type="pathway name" value="Response of EIF2AK1 (HRI) to heme deficiency"/>
</dbReference>
<dbReference type="Reactome" id="R-HSA-9818027">
    <property type="pathway name" value="NFE2L2 regulating anti-oxidant/detoxification enzymes"/>
</dbReference>
<dbReference type="Reactome" id="R-HSA-9818035">
    <property type="pathway name" value="NFE2L2 regulating ER-stress associated genes"/>
</dbReference>
<dbReference type="SignaLink" id="P18848"/>
<dbReference type="SIGNOR" id="P18848"/>
<dbReference type="BioGRID-ORCS" id="468">
    <property type="hits" value="451 hits in 1147 CRISPR screens"/>
</dbReference>
<dbReference type="ChiTaRS" id="ATF4">
    <property type="organism name" value="human"/>
</dbReference>
<dbReference type="EvolutionaryTrace" id="P18848"/>
<dbReference type="GeneWiki" id="ATF4"/>
<dbReference type="GenomeRNAi" id="468"/>
<dbReference type="Pharos" id="P18848">
    <property type="development level" value="Tbio"/>
</dbReference>
<dbReference type="PRO" id="PR:P18848"/>
<dbReference type="Proteomes" id="UP000005640">
    <property type="component" value="Chromosome 22"/>
</dbReference>
<dbReference type="RNAct" id="P18848">
    <property type="molecule type" value="protein"/>
</dbReference>
<dbReference type="Bgee" id="ENSG00000128272">
    <property type="expression patterns" value="Expressed in muscle layer of sigmoid colon and 98 other cell types or tissues"/>
</dbReference>
<dbReference type="ExpressionAtlas" id="P18848">
    <property type="expression patterns" value="baseline and differential"/>
</dbReference>
<dbReference type="GO" id="GO:1990590">
    <property type="term" value="C:ATF1-ATF4 transcription factor complex"/>
    <property type="evidence" value="ECO:0000314"/>
    <property type="project" value="ParkinsonsUK-UCL"/>
</dbReference>
<dbReference type="GO" id="GO:1990589">
    <property type="term" value="C:ATF4-CREB1 transcription factor complex"/>
    <property type="evidence" value="ECO:0000314"/>
    <property type="project" value="ParkinsonsUK-UCL"/>
</dbReference>
<dbReference type="GO" id="GO:0005813">
    <property type="term" value="C:centrosome"/>
    <property type="evidence" value="ECO:0007669"/>
    <property type="project" value="UniProtKB-SubCell"/>
</dbReference>
<dbReference type="GO" id="GO:1990617">
    <property type="term" value="C:CHOP-ATF4 complex"/>
    <property type="evidence" value="ECO:0000314"/>
    <property type="project" value="ParkinsonsUK-UCL"/>
</dbReference>
<dbReference type="GO" id="GO:0000785">
    <property type="term" value="C:chromatin"/>
    <property type="evidence" value="ECO:0000247"/>
    <property type="project" value="NTNU_SB"/>
</dbReference>
<dbReference type="GO" id="GO:0005737">
    <property type="term" value="C:cytoplasm"/>
    <property type="evidence" value="ECO:0000314"/>
    <property type="project" value="ParkinsonsUK-UCL"/>
</dbReference>
<dbReference type="GO" id="GO:0005829">
    <property type="term" value="C:cytosol"/>
    <property type="evidence" value="ECO:0000304"/>
    <property type="project" value="Reactome"/>
</dbReference>
<dbReference type="GO" id="GO:0032590">
    <property type="term" value="C:dendrite membrane"/>
    <property type="evidence" value="ECO:0007669"/>
    <property type="project" value="Ensembl"/>
</dbReference>
<dbReference type="GO" id="GO:1990037">
    <property type="term" value="C:Lewy body core"/>
    <property type="evidence" value="ECO:0000314"/>
    <property type="project" value="ParkinsonsUK-UCL"/>
</dbReference>
<dbReference type="GO" id="GO:0043005">
    <property type="term" value="C:neuron projection"/>
    <property type="evidence" value="ECO:0000314"/>
    <property type="project" value="ParkinsonsUK-UCL"/>
</dbReference>
<dbReference type="GO" id="GO:0034399">
    <property type="term" value="C:nuclear periphery"/>
    <property type="evidence" value="ECO:0000314"/>
    <property type="project" value="ParkinsonsUK-UCL"/>
</dbReference>
<dbReference type="GO" id="GO:0016607">
    <property type="term" value="C:nuclear speck"/>
    <property type="evidence" value="ECO:0007669"/>
    <property type="project" value="UniProtKB-SubCell"/>
</dbReference>
<dbReference type="GO" id="GO:0005654">
    <property type="term" value="C:nucleoplasm"/>
    <property type="evidence" value="ECO:0000314"/>
    <property type="project" value="HPA"/>
</dbReference>
<dbReference type="GO" id="GO:0005634">
    <property type="term" value="C:nucleus"/>
    <property type="evidence" value="ECO:0000314"/>
    <property type="project" value="UniProtKB"/>
</dbReference>
<dbReference type="GO" id="GO:0032991">
    <property type="term" value="C:protein-containing complex"/>
    <property type="evidence" value="ECO:0000314"/>
    <property type="project" value="UniProtKB"/>
</dbReference>
<dbReference type="GO" id="GO:0090575">
    <property type="term" value="C:RNA polymerase II transcription regulator complex"/>
    <property type="evidence" value="ECO:0000353"/>
    <property type="project" value="ComplexPortal"/>
</dbReference>
<dbReference type="GO" id="GO:0008140">
    <property type="term" value="F:cAMP response element binding protein binding"/>
    <property type="evidence" value="ECO:0000250"/>
    <property type="project" value="UniProtKB"/>
</dbReference>
<dbReference type="GO" id="GO:0003677">
    <property type="term" value="F:DNA binding"/>
    <property type="evidence" value="ECO:0000314"/>
    <property type="project" value="UniProtKB"/>
</dbReference>
<dbReference type="GO" id="GO:0001228">
    <property type="term" value="F:DNA-binding transcription activator activity, RNA polymerase II-specific"/>
    <property type="evidence" value="ECO:0000318"/>
    <property type="project" value="GO_Central"/>
</dbReference>
<dbReference type="GO" id="GO:0003700">
    <property type="term" value="F:DNA-binding transcription factor activity"/>
    <property type="evidence" value="ECO:0000314"/>
    <property type="project" value="UniProtKB"/>
</dbReference>
<dbReference type="GO" id="GO:0000981">
    <property type="term" value="F:DNA-binding transcription factor activity, RNA polymerase II-specific"/>
    <property type="evidence" value="ECO:0000314"/>
    <property type="project" value="ParkinsonsUK-UCL"/>
</dbReference>
<dbReference type="GO" id="GO:0140296">
    <property type="term" value="F:general transcription initiation factor binding"/>
    <property type="evidence" value="ECO:0007669"/>
    <property type="project" value="Ensembl"/>
</dbReference>
<dbReference type="GO" id="GO:0042802">
    <property type="term" value="F:identical protein binding"/>
    <property type="evidence" value="ECO:0000353"/>
    <property type="project" value="IntAct"/>
</dbReference>
<dbReference type="GO" id="GO:0043522">
    <property type="term" value="F:leucine zipper domain binding"/>
    <property type="evidence" value="ECO:0000314"/>
    <property type="project" value="ParkinsonsUK-UCL"/>
</dbReference>
<dbReference type="GO" id="GO:1990841">
    <property type="term" value="F:promoter-specific chromatin binding"/>
    <property type="evidence" value="ECO:0000314"/>
    <property type="project" value="MGI"/>
</dbReference>
<dbReference type="GO" id="GO:0046982">
    <property type="term" value="F:protein heterodimerization activity"/>
    <property type="evidence" value="ECO:0000250"/>
    <property type="project" value="UniProtKB"/>
</dbReference>
<dbReference type="GO" id="GO:0019901">
    <property type="term" value="F:protein kinase binding"/>
    <property type="evidence" value="ECO:0000353"/>
    <property type="project" value="UniProtKB"/>
</dbReference>
<dbReference type="GO" id="GO:0000978">
    <property type="term" value="F:RNA polymerase II cis-regulatory region sequence-specific DNA binding"/>
    <property type="evidence" value="ECO:0000250"/>
    <property type="project" value="UniProtKB"/>
</dbReference>
<dbReference type="GO" id="GO:0000977">
    <property type="term" value="F:RNA polymerase II transcription regulatory region sequence-specific DNA binding"/>
    <property type="evidence" value="ECO:0000318"/>
    <property type="project" value="GO_Central"/>
</dbReference>
<dbReference type="GO" id="GO:0061629">
    <property type="term" value="F:RNA polymerase II-specific DNA-binding transcription factor binding"/>
    <property type="evidence" value="ECO:0000353"/>
    <property type="project" value="ParkinsonsUK-UCL"/>
</dbReference>
<dbReference type="GO" id="GO:0043565">
    <property type="term" value="F:sequence-specific DNA binding"/>
    <property type="evidence" value="ECO:0000314"/>
    <property type="project" value="ParkinsonsUK-UCL"/>
</dbReference>
<dbReference type="GO" id="GO:1990837">
    <property type="term" value="F:sequence-specific double-stranded DNA binding"/>
    <property type="evidence" value="ECO:0000314"/>
    <property type="project" value="ARUK-UCL"/>
</dbReference>
<dbReference type="GO" id="GO:0000976">
    <property type="term" value="F:transcription cis-regulatory region binding"/>
    <property type="evidence" value="ECO:0000314"/>
    <property type="project" value="ParkinsonsUK-UCL"/>
</dbReference>
<dbReference type="GO" id="GO:0030282">
    <property type="term" value="P:bone mineralization"/>
    <property type="evidence" value="ECO:0000250"/>
    <property type="project" value="UniProtKB"/>
</dbReference>
<dbReference type="GO" id="GO:0034198">
    <property type="term" value="P:cellular response to amino acid starvation"/>
    <property type="evidence" value="ECO:0000250"/>
    <property type="project" value="UniProtKB"/>
</dbReference>
<dbReference type="GO" id="GO:0042149">
    <property type="term" value="P:cellular response to glucose starvation"/>
    <property type="evidence" value="ECO:0000315"/>
    <property type="project" value="ParkinsonsUK-UCL"/>
</dbReference>
<dbReference type="GO" id="GO:0071456">
    <property type="term" value="P:cellular response to hypoxia"/>
    <property type="evidence" value="ECO:0007669"/>
    <property type="project" value="Ensembl"/>
</dbReference>
<dbReference type="GO" id="GO:1990253">
    <property type="term" value="P:cellular response to leucine starvation"/>
    <property type="evidence" value="ECO:0000314"/>
    <property type="project" value="MGI"/>
</dbReference>
<dbReference type="GO" id="GO:0034599">
    <property type="term" value="P:cellular response to oxidative stress"/>
    <property type="evidence" value="ECO:0000315"/>
    <property type="project" value="ParkinsonsUK-UCL"/>
</dbReference>
<dbReference type="GO" id="GO:0034644">
    <property type="term" value="P:cellular response to UV"/>
    <property type="evidence" value="ECO:0000250"/>
    <property type="project" value="UniProtKB"/>
</dbReference>
<dbReference type="GO" id="GO:0032922">
    <property type="term" value="P:circadian regulation of gene expression"/>
    <property type="evidence" value="ECO:0000250"/>
    <property type="project" value="UniProtKB"/>
</dbReference>
<dbReference type="GO" id="GO:0035162">
    <property type="term" value="P:embryonic hemopoiesis"/>
    <property type="evidence" value="ECO:0000250"/>
    <property type="project" value="UniProtKB"/>
</dbReference>
<dbReference type="GO" id="GO:0030968">
    <property type="term" value="P:endoplasmic reticulum unfolded protein response"/>
    <property type="evidence" value="ECO:0000250"/>
    <property type="project" value="UniProtKB"/>
</dbReference>
<dbReference type="GO" id="GO:0007214">
    <property type="term" value="P:gamma-aminobutyric acid signaling pathway"/>
    <property type="evidence" value="ECO:0007669"/>
    <property type="project" value="Ensembl"/>
</dbReference>
<dbReference type="GO" id="GO:0006094">
    <property type="term" value="P:gluconeogenesis"/>
    <property type="evidence" value="ECO:0000250"/>
    <property type="project" value="UniProtKB"/>
</dbReference>
<dbReference type="GO" id="GO:0140468">
    <property type="term" value="P:HRI-mediated signaling"/>
    <property type="evidence" value="ECO:0000314"/>
    <property type="project" value="UniProtKB"/>
</dbReference>
<dbReference type="GO" id="GO:0140467">
    <property type="term" value="P:integrated stress response signaling"/>
    <property type="evidence" value="ECO:0000314"/>
    <property type="project" value="UniProtKB"/>
</dbReference>
<dbReference type="GO" id="GO:0006874">
    <property type="term" value="P:intracellular calcium ion homeostasis"/>
    <property type="evidence" value="ECO:0007669"/>
    <property type="project" value="Ensembl"/>
</dbReference>
<dbReference type="GO" id="GO:0070059">
    <property type="term" value="P:intrinsic apoptotic signaling pathway in response to endoplasmic reticulum stress"/>
    <property type="evidence" value="ECO:0000250"/>
    <property type="project" value="UniProtKB"/>
</dbReference>
<dbReference type="GO" id="GO:0070982">
    <property type="term" value="P:L-asparagine metabolic process"/>
    <property type="evidence" value="ECO:0000314"/>
    <property type="project" value="UniProtKB"/>
</dbReference>
<dbReference type="GO" id="GO:0070309">
    <property type="term" value="P:lens fiber cell morphogenesis"/>
    <property type="evidence" value="ECO:0000250"/>
    <property type="project" value="UniProtKB"/>
</dbReference>
<dbReference type="GO" id="GO:0042789">
    <property type="term" value="P:mRNA transcription by RNA polymerase II"/>
    <property type="evidence" value="ECO:0000250"/>
    <property type="project" value="UniProtKB"/>
</dbReference>
<dbReference type="GO" id="GO:0120163">
    <property type="term" value="P:negative regulation of cold-induced thermogenesis"/>
    <property type="evidence" value="ECO:0000250"/>
    <property type="project" value="YuBioLab"/>
</dbReference>
<dbReference type="GO" id="GO:1903377">
    <property type="term" value="P:negative regulation of oxidative stress-induced neuron intrinsic apoptotic signaling pathway"/>
    <property type="evidence" value="ECO:0000316"/>
    <property type="project" value="ParkinsonsUK-UCL"/>
</dbReference>
<dbReference type="GO" id="GO:0043267">
    <property type="term" value="P:negative regulation of potassium ion transport"/>
    <property type="evidence" value="ECO:0007669"/>
    <property type="project" value="Ensembl"/>
</dbReference>
<dbReference type="GO" id="GO:0000122">
    <property type="term" value="P:negative regulation of transcription by RNA polymerase II"/>
    <property type="evidence" value="ECO:0000250"/>
    <property type="project" value="UniProtKB"/>
</dbReference>
<dbReference type="GO" id="GO:0032057">
    <property type="term" value="P:negative regulation of translational initiation in response to stress"/>
    <property type="evidence" value="ECO:0000250"/>
    <property type="project" value="UniProtKB"/>
</dbReference>
<dbReference type="GO" id="GO:0030182">
    <property type="term" value="P:neuron differentiation"/>
    <property type="evidence" value="ECO:0007669"/>
    <property type="project" value="Ensembl"/>
</dbReference>
<dbReference type="GO" id="GO:0036499">
    <property type="term" value="P:PERK-mediated unfolded protein response"/>
    <property type="evidence" value="ECO:0000314"/>
    <property type="project" value="UniProtKB"/>
</dbReference>
<dbReference type="GO" id="GO:0043065">
    <property type="term" value="P:positive regulation of apoptotic process"/>
    <property type="evidence" value="ECO:0000304"/>
    <property type="project" value="ParkinsonsUK-UCL"/>
</dbReference>
<dbReference type="GO" id="GO:0070169">
    <property type="term" value="P:positive regulation of biomineral tissue development"/>
    <property type="evidence" value="ECO:0007669"/>
    <property type="project" value="Ensembl"/>
</dbReference>
<dbReference type="GO" id="GO:0045893">
    <property type="term" value="P:positive regulation of DNA-templated transcription"/>
    <property type="evidence" value="ECO:0000314"/>
    <property type="project" value="UniProtKB"/>
</dbReference>
<dbReference type="GO" id="GO:0010628">
    <property type="term" value="P:positive regulation of gene expression"/>
    <property type="evidence" value="ECO:0000315"/>
    <property type="project" value="ARUK-UCL"/>
</dbReference>
<dbReference type="GO" id="GO:0043525">
    <property type="term" value="P:positive regulation of neuron apoptotic process"/>
    <property type="evidence" value="ECO:0000250"/>
    <property type="project" value="UniProtKB"/>
</dbReference>
<dbReference type="GO" id="GO:2000120">
    <property type="term" value="P:positive regulation of sodium-dependent phosphate transport"/>
    <property type="evidence" value="ECO:0007669"/>
    <property type="project" value="Ensembl"/>
</dbReference>
<dbReference type="GO" id="GO:0045943">
    <property type="term" value="P:positive regulation of transcription by RNA polymerase I"/>
    <property type="evidence" value="ECO:0000315"/>
    <property type="project" value="ParkinsonsUK-UCL"/>
</dbReference>
<dbReference type="GO" id="GO:0045944">
    <property type="term" value="P:positive regulation of transcription by RNA polymerase II"/>
    <property type="evidence" value="ECO:0000314"/>
    <property type="project" value="UniProtKB"/>
</dbReference>
<dbReference type="GO" id="GO:1905461">
    <property type="term" value="P:positive regulation of vascular associated smooth muscle cell apoptotic process"/>
    <property type="evidence" value="ECO:0007669"/>
    <property type="project" value="Ensembl"/>
</dbReference>
<dbReference type="GO" id="GO:0010575">
    <property type="term" value="P:positive regulation of vascular endothelial growth factor production"/>
    <property type="evidence" value="ECO:0000315"/>
    <property type="project" value="ParkinsonsUK-UCL"/>
</dbReference>
<dbReference type="GO" id="GO:0006355">
    <property type="term" value="P:regulation of DNA-templated transcription"/>
    <property type="evidence" value="ECO:0000250"/>
    <property type="project" value="UniProtKB"/>
</dbReference>
<dbReference type="GO" id="GO:0045667">
    <property type="term" value="P:regulation of osteoblast differentiation"/>
    <property type="evidence" value="ECO:0000314"/>
    <property type="project" value="UniProtKB"/>
</dbReference>
<dbReference type="GO" id="GO:0048167">
    <property type="term" value="P:regulation of synaptic plasticity"/>
    <property type="evidence" value="ECO:0000250"/>
    <property type="project" value="UniProtKB"/>
</dbReference>
<dbReference type="GO" id="GO:0006357">
    <property type="term" value="P:regulation of transcription by RNA polymerase II"/>
    <property type="evidence" value="ECO:0000266"/>
    <property type="project" value="ComplexPortal"/>
</dbReference>
<dbReference type="GO" id="GO:0034976">
    <property type="term" value="P:response to endoplasmic reticulum stress"/>
    <property type="evidence" value="ECO:0000314"/>
    <property type="project" value="UniProtKB"/>
</dbReference>
<dbReference type="GO" id="GO:1990737">
    <property type="term" value="P:response to manganese-induced endoplasmic reticulum stress"/>
    <property type="evidence" value="ECO:0007669"/>
    <property type="project" value="Ensembl"/>
</dbReference>
<dbReference type="GO" id="GO:0031667">
    <property type="term" value="P:response to nutrient levels"/>
    <property type="evidence" value="ECO:0000314"/>
    <property type="project" value="UniProtKB"/>
</dbReference>
<dbReference type="GO" id="GO:0009636">
    <property type="term" value="P:response to toxic substance"/>
    <property type="evidence" value="ECO:0007669"/>
    <property type="project" value="Ensembl"/>
</dbReference>
<dbReference type="GO" id="GO:0006366">
    <property type="term" value="P:transcription by RNA polymerase II"/>
    <property type="evidence" value="ECO:0000250"/>
    <property type="project" value="UniProtKB"/>
</dbReference>
<dbReference type="CDD" id="cd14692">
    <property type="entry name" value="bZIP_ATF4"/>
    <property type="match status" value="1"/>
</dbReference>
<dbReference type="FunFam" id="1.20.5.170:FF:000021">
    <property type="entry name" value="Cyclic AMP-dependent transcription factor ATF-4"/>
    <property type="match status" value="1"/>
</dbReference>
<dbReference type="Gene3D" id="1.20.5.170">
    <property type="match status" value="1"/>
</dbReference>
<dbReference type="InterPro" id="IPR004827">
    <property type="entry name" value="bZIP"/>
</dbReference>
<dbReference type="InterPro" id="IPR046347">
    <property type="entry name" value="bZIP_sf"/>
</dbReference>
<dbReference type="PANTHER" id="PTHR13044">
    <property type="entry name" value="ACTIVATING TRANSCRIPTION FACTOR ATF 4/5"/>
    <property type="match status" value="1"/>
</dbReference>
<dbReference type="PANTHER" id="PTHR13044:SF2">
    <property type="entry name" value="CYCLIC AMP-DEPENDENT TRANSCRIPTION FACTOR ATF-4"/>
    <property type="match status" value="1"/>
</dbReference>
<dbReference type="Pfam" id="PF00170">
    <property type="entry name" value="bZIP_1"/>
    <property type="match status" value="1"/>
</dbReference>
<dbReference type="SMART" id="SM00338">
    <property type="entry name" value="BRLZ"/>
    <property type="match status" value="1"/>
</dbReference>
<dbReference type="SUPFAM" id="SSF57959">
    <property type="entry name" value="Leucine zipper domain"/>
    <property type="match status" value="1"/>
</dbReference>
<dbReference type="PROSITE" id="PS50217">
    <property type="entry name" value="BZIP"/>
    <property type="match status" value="1"/>
</dbReference>
<dbReference type="PROSITE" id="PS00036">
    <property type="entry name" value="BZIP_BASIC"/>
    <property type="match status" value="1"/>
</dbReference>
<name>ATF4_HUMAN</name>
<evidence type="ECO:0000250" key="1"/>
<evidence type="ECO:0000250" key="2">
    <source>
        <dbReference type="UniProtKB" id="Q06507"/>
    </source>
</evidence>
<evidence type="ECO:0000250" key="3">
    <source>
        <dbReference type="UniProtKB" id="Q9ES19"/>
    </source>
</evidence>
<evidence type="ECO:0000255" key="4">
    <source>
        <dbReference type="PROSITE-ProRule" id="PRU00978"/>
    </source>
</evidence>
<evidence type="ECO:0000256" key="5">
    <source>
        <dbReference type="SAM" id="MobiDB-lite"/>
    </source>
</evidence>
<evidence type="ECO:0000269" key="6">
    <source>
    </source>
</evidence>
<evidence type="ECO:0000269" key="7">
    <source>
    </source>
</evidence>
<evidence type="ECO:0000269" key="8">
    <source>
    </source>
</evidence>
<evidence type="ECO:0000269" key="9">
    <source>
    </source>
</evidence>
<evidence type="ECO:0000269" key="10">
    <source>
    </source>
</evidence>
<evidence type="ECO:0000269" key="11">
    <source>
    </source>
</evidence>
<evidence type="ECO:0000269" key="12">
    <source>
    </source>
</evidence>
<evidence type="ECO:0000269" key="13">
    <source>
    </source>
</evidence>
<evidence type="ECO:0000269" key="14">
    <source>
    </source>
</evidence>
<evidence type="ECO:0000269" key="15">
    <source>
    </source>
</evidence>
<evidence type="ECO:0000269" key="16">
    <source>
    </source>
</evidence>
<evidence type="ECO:0000269" key="17">
    <source>
    </source>
</evidence>
<evidence type="ECO:0000269" key="18">
    <source>
    </source>
</evidence>
<evidence type="ECO:0000269" key="19">
    <source>
    </source>
</evidence>
<evidence type="ECO:0000269" key="20">
    <source>
    </source>
</evidence>
<evidence type="ECO:0000269" key="21">
    <source>
    </source>
</evidence>
<evidence type="ECO:0000269" key="22">
    <source>
    </source>
</evidence>
<evidence type="ECO:0000269" key="23">
    <source>
    </source>
</evidence>
<evidence type="ECO:0000269" key="24">
    <source>
    </source>
</evidence>
<evidence type="ECO:0000269" key="25">
    <source>
    </source>
</evidence>
<evidence type="ECO:0000269" key="26">
    <source>
    </source>
</evidence>
<evidence type="ECO:0000269" key="27">
    <source>
    </source>
</evidence>
<evidence type="ECO:0000269" key="28">
    <source>
    </source>
</evidence>
<evidence type="ECO:0000303" key="29">
    <source>
    </source>
</evidence>
<evidence type="ECO:0000303" key="30">
    <source>
    </source>
</evidence>
<evidence type="ECO:0000303" key="31">
    <source>
    </source>
</evidence>
<evidence type="ECO:0000303" key="32">
    <source>
    </source>
</evidence>
<evidence type="ECO:0000305" key="33"/>
<evidence type="ECO:0000305" key="34">
    <source>
    </source>
</evidence>
<evidence type="ECO:0000312" key="35">
    <source>
        <dbReference type="HGNC" id="HGNC:786"/>
    </source>
</evidence>
<evidence type="ECO:0007744" key="36">
    <source>
    </source>
</evidence>
<evidence type="ECO:0007744" key="37">
    <source>
    </source>
</evidence>
<evidence type="ECO:0007829" key="38">
    <source>
        <dbReference type="PDB" id="1CI6"/>
    </source>
</evidence>
<gene>
    <name evidence="31 35" type="primary">ATF4</name>
    <name evidence="29" type="synonym">CREB2</name>
    <name evidence="30" type="synonym">TXREB</name>
</gene>
<accession>P18848</accession>
<accession>Q96AQ3</accession>
<accession>Q9UH31</accession>